<evidence type="ECO:0000250" key="1"/>
<evidence type="ECO:0000250" key="2">
    <source>
        <dbReference type="UniProtKB" id="P39689"/>
    </source>
</evidence>
<evidence type="ECO:0000255" key="3"/>
<evidence type="ECO:0000256" key="4">
    <source>
        <dbReference type="SAM" id="MobiDB-lite"/>
    </source>
</evidence>
<evidence type="ECO:0000269" key="5">
    <source>
    </source>
</evidence>
<evidence type="ECO:0000269" key="6">
    <source>
    </source>
</evidence>
<evidence type="ECO:0000269" key="7">
    <source>
    </source>
</evidence>
<evidence type="ECO:0000269" key="8">
    <source>
    </source>
</evidence>
<evidence type="ECO:0000269" key="9">
    <source>
    </source>
</evidence>
<evidence type="ECO:0000269" key="10">
    <source>
    </source>
</evidence>
<evidence type="ECO:0000269" key="11">
    <source>
    </source>
</evidence>
<evidence type="ECO:0000269" key="12">
    <source>
    </source>
</evidence>
<evidence type="ECO:0000269" key="13">
    <source>
    </source>
</evidence>
<evidence type="ECO:0000269" key="14">
    <source>
    </source>
</evidence>
<evidence type="ECO:0000269" key="15">
    <source>
    </source>
</evidence>
<evidence type="ECO:0000269" key="16">
    <source>
    </source>
</evidence>
<evidence type="ECO:0000269" key="17">
    <source>
    </source>
</evidence>
<evidence type="ECO:0000269" key="18">
    <source>
    </source>
</evidence>
<evidence type="ECO:0000269" key="19">
    <source>
    </source>
</evidence>
<evidence type="ECO:0000269" key="20">
    <source>
    </source>
</evidence>
<evidence type="ECO:0000269" key="21">
    <source>
    </source>
</evidence>
<evidence type="ECO:0000269" key="22">
    <source>
    </source>
</evidence>
<evidence type="ECO:0000269" key="23">
    <source>
    </source>
</evidence>
<evidence type="ECO:0000269" key="24">
    <source>
    </source>
</evidence>
<evidence type="ECO:0000269" key="25">
    <source>
    </source>
</evidence>
<evidence type="ECO:0000269" key="26">
    <source ref="8"/>
</evidence>
<evidence type="ECO:0000305" key="27"/>
<evidence type="ECO:0000305" key="28">
    <source>
    </source>
</evidence>
<evidence type="ECO:0000312" key="29">
    <source>
        <dbReference type="HGNC" id="HGNC:1784"/>
    </source>
</evidence>
<evidence type="ECO:0007744" key="30">
    <source>
    </source>
</evidence>
<evidence type="ECO:0007744" key="31">
    <source>
    </source>
</evidence>
<evidence type="ECO:0007829" key="32">
    <source>
        <dbReference type="PDB" id="5E0U"/>
    </source>
</evidence>
<evidence type="ECO:0007829" key="33">
    <source>
        <dbReference type="PDB" id="6P8H"/>
    </source>
</evidence>
<evidence type="ECO:0007829" key="34">
    <source>
        <dbReference type="PDB" id="7KQ1"/>
    </source>
</evidence>
<accession>P38936</accession>
<accession>Q14010</accession>
<accession>Q6FI05</accession>
<accession>Q9BUT4</accession>
<gene>
    <name evidence="29" type="primary">CDKN1A</name>
    <name type="synonym">CAP20</name>
    <name type="synonym">CDKN1</name>
    <name type="synonym">CIP1</name>
    <name type="synonym">MDA6</name>
    <name type="synonym">PIC1</name>
    <name type="synonym">SDI1</name>
    <name type="synonym">WAF1</name>
</gene>
<feature type="initiator methionine" description="Removed" evidence="12">
    <location>
        <position position="1"/>
    </location>
</feature>
<feature type="chain" id="PRO_0000190079" description="Cyclin-dependent kinase inhibitor 1">
    <location>
        <begin position="2"/>
        <end position="164"/>
    </location>
</feature>
<feature type="zinc finger region" description="C4-type" evidence="3">
    <location>
        <begin position="13"/>
        <end position="41"/>
    </location>
</feature>
<feature type="region of interest" description="Required for binding cyclins">
    <location>
        <begin position="17"/>
        <end position="24"/>
    </location>
</feature>
<feature type="region of interest" description="Required for binding CDKs">
    <location>
        <begin position="53"/>
        <end position="58"/>
    </location>
</feature>
<feature type="region of interest" description="Disordered" evidence="4">
    <location>
        <begin position="76"/>
        <end position="164"/>
    </location>
</feature>
<feature type="region of interest" description="Interaction with TRIM39" evidence="19">
    <location>
        <begin position="152"/>
        <end position="164"/>
    </location>
</feature>
<feature type="short sequence motif" description="PIP-box K+4 motif">
    <location>
        <begin position="140"/>
        <end position="164"/>
    </location>
</feature>
<feature type="short sequence motif" description="Nuclear localization signal" evidence="3">
    <location>
        <begin position="141"/>
        <end position="156"/>
    </location>
</feature>
<feature type="compositionally biased region" description="Basic residues" evidence="4">
    <location>
        <begin position="153"/>
        <end position="164"/>
    </location>
</feature>
<feature type="modified residue" description="N-acetylserine" evidence="12">
    <location>
        <position position="2"/>
    </location>
</feature>
<feature type="modified residue" description="Phosphothreonine; by LKB1" evidence="20">
    <location>
        <position position="80"/>
    </location>
</feature>
<feature type="modified residue" description="Phosphoserine; by GSK3-beta" evidence="15">
    <location>
        <position position="114"/>
    </location>
</feature>
<feature type="modified residue" description="Phosphoserine" evidence="30 31">
    <location>
        <position position="130"/>
    </location>
</feature>
<feature type="modified residue" description="Phosphothreonine; by PKA, PKB/AKT1, PIM1 and PIM2" evidence="5 7 9 13 18">
    <location>
        <position position="145"/>
    </location>
</feature>
<feature type="modified residue" description="Phosphoserine; by PKC and NUAK1" evidence="5 20">
    <location>
        <position position="146"/>
    </location>
</feature>
<feature type="modified residue" description="Phosphoserine; by PKC; in vitro" evidence="5">
    <location>
        <position position="160"/>
    </location>
</feature>
<feature type="cross-link" description="Glycyl serine ester (Ser-Gly) (interchain with G-Cter in ubiquitin)" evidence="28">
    <location>
        <position position="2"/>
    </location>
</feature>
<feature type="sequence variant" id="VAR_048686" description="In dbSNP:rs4986866.">
    <original>P</original>
    <variation>L</variation>
    <location>
        <position position="4"/>
    </location>
</feature>
<feature type="sequence variant" id="VAR_011870" description="In dbSNP:rs1801270." evidence="11 21 26">
    <original>S</original>
    <variation>R</variation>
    <location>
        <position position="31"/>
    </location>
</feature>
<feature type="sequence variant" id="VAR_048687" description="In dbSNP:rs4986867.">
    <original>F</original>
    <variation>L</variation>
    <location>
        <position position="63"/>
    </location>
</feature>
<feature type="mutagenesis site" description="Abolishes UV radiation-induced phosphorylation and subsequent degradation." evidence="20">
    <original>T</original>
    <variation>A</variation>
    <location>
        <position position="80"/>
    </location>
</feature>
<feature type="mutagenesis site" description="Phosphomimetic mutant, increases ubiquitination by the DCX(DTL) complex." evidence="15">
    <original>S</original>
    <variation>E</variation>
    <location>
        <position position="114"/>
    </location>
</feature>
<feature type="mutagenesis site" description="Abolishes interaction with PCNA and subsequent degradation by the proteasome." evidence="15">
    <original>QTSMTDF</original>
    <variation>ATSATDA</variation>
    <location>
        <begin position="144"/>
        <end position="150"/>
    </location>
</feature>
<feature type="mutagenesis site" description="Reduces phosphorylation by Akt; no change in interaction with PCNA, CDK2 or CDK4; no change in subcellular location." evidence="7">
    <original>T</original>
    <variation>A</variation>
    <location>
        <position position="145"/>
    </location>
</feature>
<feature type="mutagenesis site" description="No interaction with PCNA; 59% inhibition of CDK2 binding; modest inhibition of CDK4 binding; no change in subcellular location." evidence="7">
    <original>T</original>
    <variation>D</variation>
    <location>
        <position position="145"/>
    </location>
</feature>
<feature type="mutagenesis site" description="No change in interaction with PCNA. Abolishes UV radiation-induced phosphorylation and subsequent degradation." evidence="7 20">
    <original>S</original>
    <variation>A</variation>
    <location>
        <position position="146"/>
    </location>
</feature>
<feature type="mutagenesis site" description="Reduces interaction with PCNA." evidence="7">
    <original>S</original>
    <variation>D</variation>
    <location>
        <position position="146"/>
    </location>
</feature>
<feature type="mutagenesis site" description="Abolishes interaction with PCNA and subsequent degradation by the proteasome." evidence="14">
    <original>MTDFY</original>
    <variation>ATDAAA</variation>
    <location>
        <begin position="147"/>
        <end position="151"/>
    </location>
</feature>
<feature type="mutagenesis site" description="Abolishes degradation by the proteasome without affecting the interaction with PCNA." evidence="14">
    <original>KRR</original>
    <variation>AAA</variation>
    <location>
        <begin position="154"/>
        <end position="156"/>
    </location>
</feature>
<feature type="mutagenesis site" description="Loss of interaction with TRIM39." evidence="19">
    <original>K</original>
    <variation>A</variation>
    <location>
        <position position="154"/>
    </location>
</feature>
<feature type="strand" evidence="33">
    <location>
        <begin position="21"/>
        <end position="23"/>
    </location>
</feature>
<feature type="helix" evidence="33">
    <location>
        <begin position="27"/>
        <end position="46"/>
    </location>
</feature>
<feature type="strand" evidence="33">
    <location>
        <begin position="49"/>
        <end position="51"/>
    </location>
</feature>
<feature type="turn" evidence="33">
    <location>
        <begin position="53"/>
        <end position="56"/>
    </location>
</feature>
<feature type="strand" evidence="34">
    <location>
        <begin position="142"/>
        <end position="144"/>
    </location>
</feature>
<feature type="helix" evidence="32">
    <location>
        <begin position="147"/>
        <end position="149"/>
    </location>
</feature>
<feature type="strand" evidence="32">
    <location>
        <begin position="153"/>
        <end position="158"/>
    </location>
</feature>
<name>CDN1A_HUMAN</name>
<organism>
    <name type="scientific">Homo sapiens</name>
    <name type="common">Human</name>
    <dbReference type="NCBI Taxonomy" id="9606"/>
    <lineage>
        <taxon>Eukaryota</taxon>
        <taxon>Metazoa</taxon>
        <taxon>Chordata</taxon>
        <taxon>Craniata</taxon>
        <taxon>Vertebrata</taxon>
        <taxon>Euteleostomi</taxon>
        <taxon>Mammalia</taxon>
        <taxon>Eutheria</taxon>
        <taxon>Euarchontoglires</taxon>
        <taxon>Primates</taxon>
        <taxon>Haplorrhini</taxon>
        <taxon>Catarrhini</taxon>
        <taxon>Hominidae</taxon>
        <taxon>Homo</taxon>
    </lineage>
</organism>
<sequence>MSEPAGDVRQNPCGSKACRRLFGPVDSEQLSRDCDALMAGCIQEARERWNFDFVTETPLEGDFAWERVRGLGLPKLYLPTGPRRGRDELGGGRRPGTSPALLQGTAEEDHVDLSLSCTLVPRSGEQAEGSPGGPGDSQGRKRRQTSMTDFYHSKRRLIFSKRKP</sequence>
<proteinExistence type="evidence at protein level"/>
<reference key="1">
    <citation type="journal article" date="1993" name="Cell">
        <title>The p21 Cdk-interacting protein Cip1 is a potent inhibitor of G1 cyclin-dependent kinases.</title>
        <authorList>
            <person name="Harper J.W."/>
            <person name="Adami G.R."/>
            <person name="Wei N."/>
            <person name="Keyomarsi K."/>
            <person name="Elledge S.J."/>
        </authorList>
    </citation>
    <scope>NUCLEOTIDE SEQUENCE [MRNA]</scope>
    <scope>FUNCTION</scope>
    <scope>INDUCTION</scope>
</reference>
<reference key="2">
    <citation type="journal article" date="1993" name="Cell">
        <title>WAF1, a potential mediator of p53 tumor suppression.</title>
        <authorList>
            <person name="El-Deiry W.S."/>
            <person name="Tokino T."/>
            <person name="Velculescu V.E."/>
            <person name="Levy D.B."/>
            <person name="Parsons R."/>
            <person name="Trent J.M."/>
            <person name="Lin D."/>
            <person name="Mercer W.E."/>
            <person name="Kinzler K.W."/>
            <person name="Vogelstein B."/>
        </authorList>
    </citation>
    <scope>NUCLEOTIDE SEQUENCE [MRNA]</scope>
    <scope>INDUCTION</scope>
</reference>
<reference key="3">
    <citation type="journal article" date="1993" name="Nature">
        <title>p21 is a universal inhibitor of cyclin kinases.</title>
        <authorList>
            <person name="Xiong Y."/>
            <person name="Hannon G.J."/>
            <person name="Zhang H."/>
            <person name="Casso D."/>
            <person name="Kobayashi R."/>
            <person name="Beach D."/>
        </authorList>
    </citation>
    <scope>NUCLEOTIDE SEQUENCE [MRNA]</scope>
</reference>
<reference key="4">
    <citation type="journal article" date="1993" name="Mol. Cell. Differ.">
        <title>Use of a sensitive and efficient subtraction hybridization protocol for the identification of genes differentially regulated during the induction of differentiation in human melanoma cells.</title>
        <authorList>
            <person name="Jiang H."/>
            <person name="Fisher P.B."/>
        </authorList>
    </citation>
    <scope>NUCLEOTIDE SEQUENCE [MRNA]</scope>
</reference>
<reference key="5">
    <citation type="journal article" date="1995" name="Oncogene">
        <title>The melanoma differentiation-associated gene mda-6, which encodes the cyclin-dependent kinase inhibitor p21, is differentially expressed during growth, differentiation and progression in human melanoma cells.</title>
        <authorList>
            <person name="Jiang H."/>
            <person name="Lin J."/>
            <person name="Su Z.Z."/>
            <person name="Herlyn M."/>
            <person name="Kerbel R.S."/>
            <person name="Weissman B.E."/>
            <person name="Welch D.R."/>
            <person name="Fisher P.B."/>
        </authorList>
    </citation>
    <scope>NUCLEOTIDE SEQUENCE [MRNA]</scope>
</reference>
<reference key="6">
    <citation type="journal article" date="1994" name="Exp. Cell Res.">
        <title>Cloning of senescent cell-derived inhibitors of DNA synthesis using an expression screen.</title>
        <authorList>
            <person name="Noda A."/>
            <person name="Ning Y."/>
            <person name="Venable S.F."/>
            <person name="Pereira-Smith O.M."/>
            <person name="Smith J.R."/>
        </authorList>
    </citation>
    <scope>NUCLEOTIDE SEQUENCE [MRNA]</scope>
</reference>
<reference key="7">
    <citation type="journal article" date="1995" name="Hum. Mol. Genet.">
        <title>Two variants of the CIP1/WAF1 gene occur together and are associated with human cancer.</title>
        <authorList>
            <person name="Mousses S."/>
            <person name="Oezcelik H."/>
            <person name="Lee P.D."/>
            <person name="Malkin D."/>
            <person name="Bull S.B."/>
            <person name="Andrulis I.L."/>
        </authorList>
    </citation>
    <scope>NUCLEOTIDE SEQUENCE [MRNA]</scope>
    <scope>VARIANT ARG-31</scope>
</reference>
<reference key="8">
    <citation type="submission" date="2002-04" db="EMBL/GenBank/DDBJ databases">
        <authorList>
            <consortium name="NIEHS SNPs program"/>
        </authorList>
    </citation>
    <scope>NUCLEOTIDE SEQUENCE [GENOMIC DNA]</scope>
    <scope>VARIANT ARG-31</scope>
</reference>
<reference key="9">
    <citation type="submission" date="2003-05" db="EMBL/GenBank/DDBJ databases">
        <title>Cloning of human full-length CDSs in BD Creator(TM) system donor vector.</title>
        <authorList>
            <person name="Kalnine N."/>
            <person name="Chen X."/>
            <person name="Rolfs A."/>
            <person name="Halleck A."/>
            <person name="Hines L."/>
            <person name="Eisenstein S."/>
            <person name="Koundinya M."/>
            <person name="Raphael J."/>
            <person name="Moreira D."/>
            <person name="Kelley T."/>
            <person name="LaBaer J."/>
            <person name="Lin Y."/>
            <person name="Phelan M."/>
            <person name="Farmer A."/>
        </authorList>
    </citation>
    <scope>NUCLEOTIDE SEQUENCE [LARGE SCALE MRNA]</scope>
</reference>
<reference key="10">
    <citation type="submission" date="2004-06" db="EMBL/GenBank/DDBJ databases">
        <title>Cloning of human full open reading frames in Gateway(TM) system entry vector (pDONR201).</title>
        <authorList>
            <person name="Ebert L."/>
            <person name="Schick M."/>
            <person name="Neubert P."/>
            <person name="Schatten R."/>
            <person name="Henze S."/>
            <person name="Korn B."/>
        </authorList>
    </citation>
    <scope>NUCLEOTIDE SEQUENCE [LARGE SCALE MRNA]</scope>
</reference>
<reference key="11">
    <citation type="journal article" date="2008" name="Nat. Methods">
        <title>Human protein factory for converting the transcriptome into an in vitro-expressed proteome.</title>
        <authorList>
            <person name="Goshima N."/>
            <person name="Kawamura Y."/>
            <person name="Fukumoto A."/>
            <person name="Miura A."/>
            <person name="Honma R."/>
            <person name="Satoh R."/>
            <person name="Wakamatsu A."/>
            <person name="Yamamoto J."/>
            <person name="Kimura K."/>
            <person name="Nishikawa T."/>
            <person name="Andoh T."/>
            <person name="Iida Y."/>
            <person name="Ishikawa K."/>
            <person name="Ito E."/>
            <person name="Kagawa N."/>
            <person name="Kaminaga C."/>
            <person name="Kanehori K."/>
            <person name="Kawakami B."/>
            <person name="Kenmochi K."/>
            <person name="Kimura R."/>
            <person name="Kobayashi M."/>
            <person name="Kuroita T."/>
            <person name="Kuwayama H."/>
            <person name="Maruyama Y."/>
            <person name="Matsuo K."/>
            <person name="Minami K."/>
            <person name="Mitsubori M."/>
            <person name="Mori M."/>
            <person name="Morishita R."/>
            <person name="Murase A."/>
            <person name="Nishikawa A."/>
            <person name="Nishikawa S."/>
            <person name="Okamoto T."/>
            <person name="Sakagami N."/>
            <person name="Sakamoto Y."/>
            <person name="Sasaki Y."/>
            <person name="Seki T."/>
            <person name="Sono S."/>
            <person name="Sugiyama A."/>
            <person name="Sumiya T."/>
            <person name="Takayama T."/>
            <person name="Takayama Y."/>
            <person name="Takeda H."/>
            <person name="Togashi T."/>
            <person name="Yahata K."/>
            <person name="Yamada H."/>
            <person name="Yanagisawa Y."/>
            <person name="Endo Y."/>
            <person name="Imamoto F."/>
            <person name="Kisu Y."/>
            <person name="Tanaka S."/>
            <person name="Isogai T."/>
            <person name="Imai J."/>
            <person name="Watanabe S."/>
            <person name="Nomura N."/>
        </authorList>
    </citation>
    <scope>NUCLEOTIDE SEQUENCE [LARGE SCALE MRNA]</scope>
</reference>
<reference key="12">
    <citation type="journal article" date="2003" name="Nature">
        <title>The DNA sequence and analysis of human chromosome 6.</title>
        <authorList>
            <person name="Mungall A.J."/>
            <person name="Palmer S.A."/>
            <person name="Sims S.K."/>
            <person name="Edwards C.A."/>
            <person name="Ashurst J.L."/>
            <person name="Wilming L."/>
            <person name="Jones M.C."/>
            <person name="Horton R."/>
            <person name="Hunt S.E."/>
            <person name="Scott C.E."/>
            <person name="Gilbert J.G.R."/>
            <person name="Clamp M.E."/>
            <person name="Bethel G."/>
            <person name="Milne S."/>
            <person name="Ainscough R."/>
            <person name="Almeida J.P."/>
            <person name="Ambrose K.D."/>
            <person name="Andrews T.D."/>
            <person name="Ashwell R.I.S."/>
            <person name="Babbage A.K."/>
            <person name="Bagguley C.L."/>
            <person name="Bailey J."/>
            <person name="Banerjee R."/>
            <person name="Barker D.J."/>
            <person name="Barlow K.F."/>
            <person name="Bates K."/>
            <person name="Beare D.M."/>
            <person name="Beasley H."/>
            <person name="Beasley O."/>
            <person name="Bird C.P."/>
            <person name="Blakey S.E."/>
            <person name="Bray-Allen S."/>
            <person name="Brook J."/>
            <person name="Brown A.J."/>
            <person name="Brown J.Y."/>
            <person name="Burford D.C."/>
            <person name="Burrill W."/>
            <person name="Burton J."/>
            <person name="Carder C."/>
            <person name="Carter N.P."/>
            <person name="Chapman J.C."/>
            <person name="Clark S.Y."/>
            <person name="Clark G."/>
            <person name="Clee C.M."/>
            <person name="Clegg S."/>
            <person name="Cobley V."/>
            <person name="Collier R.E."/>
            <person name="Collins J.E."/>
            <person name="Colman L.K."/>
            <person name="Corby N.R."/>
            <person name="Coville G.J."/>
            <person name="Culley K.M."/>
            <person name="Dhami P."/>
            <person name="Davies J."/>
            <person name="Dunn M."/>
            <person name="Earthrowl M.E."/>
            <person name="Ellington A.E."/>
            <person name="Evans K.A."/>
            <person name="Faulkner L."/>
            <person name="Francis M.D."/>
            <person name="Frankish A."/>
            <person name="Frankland J."/>
            <person name="French L."/>
            <person name="Garner P."/>
            <person name="Garnett J."/>
            <person name="Ghori M.J."/>
            <person name="Gilby L.M."/>
            <person name="Gillson C.J."/>
            <person name="Glithero R.J."/>
            <person name="Grafham D.V."/>
            <person name="Grant M."/>
            <person name="Gribble S."/>
            <person name="Griffiths C."/>
            <person name="Griffiths M.N.D."/>
            <person name="Hall R."/>
            <person name="Halls K.S."/>
            <person name="Hammond S."/>
            <person name="Harley J.L."/>
            <person name="Hart E.A."/>
            <person name="Heath P.D."/>
            <person name="Heathcott R."/>
            <person name="Holmes S.J."/>
            <person name="Howden P.J."/>
            <person name="Howe K.L."/>
            <person name="Howell G.R."/>
            <person name="Huckle E."/>
            <person name="Humphray S.J."/>
            <person name="Humphries M.D."/>
            <person name="Hunt A.R."/>
            <person name="Johnson C.M."/>
            <person name="Joy A.A."/>
            <person name="Kay M."/>
            <person name="Keenan S.J."/>
            <person name="Kimberley A.M."/>
            <person name="King A."/>
            <person name="Laird G.K."/>
            <person name="Langford C."/>
            <person name="Lawlor S."/>
            <person name="Leongamornlert D.A."/>
            <person name="Leversha M."/>
            <person name="Lloyd C.R."/>
            <person name="Lloyd D.M."/>
            <person name="Loveland J.E."/>
            <person name="Lovell J."/>
            <person name="Martin S."/>
            <person name="Mashreghi-Mohammadi M."/>
            <person name="Maslen G.L."/>
            <person name="Matthews L."/>
            <person name="McCann O.T."/>
            <person name="McLaren S.J."/>
            <person name="McLay K."/>
            <person name="McMurray A."/>
            <person name="Moore M.J.F."/>
            <person name="Mullikin J.C."/>
            <person name="Niblett D."/>
            <person name="Nickerson T."/>
            <person name="Novik K.L."/>
            <person name="Oliver K."/>
            <person name="Overton-Larty E.K."/>
            <person name="Parker A."/>
            <person name="Patel R."/>
            <person name="Pearce A.V."/>
            <person name="Peck A.I."/>
            <person name="Phillimore B.J.C.T."/>
            <person name="Phillips S."/>
            <person name="Plumb R.W."/>
            <person name="Porter K.M."/>
            <person name="Ramsey Y."/>
            <person name="Ranby S.A."/>
            <person name="Rice C.M."/>
            <person name="Ross M.T."/>
            <person name="Searle S.M."/>
            <person name="Sehra H.K."/>
            <person name="Sheridan E."/>
            <person name="Skuce C.D."/>
            <person name="Smith S."/>
            <person name="Smith M."/>
            <person name="Spraggon L."/>
            <person name="Squares S.L."/>
            <person name="Steward C.A."/>
            <person name="Sycamore N."/>
            <person name="Tamlyn-Hall G."/>
            <person name="Tester J."/>
            <person name="Theaker A.J."/>
            <person name="Thomas D.W."/>
            <person name="Thorpe A."/>
            <person name="Tracey A."/>
            <person name="Tromans A."/>
            <person name="Tubby B."/>
            <person name="Wall M."/>
            <person name="Wallis J.M."/>
            <person name="West A.P."/>
            <person name="White S.S."/>
            <person name="Whitehead S.L."/>
            <person name="Whittaker H."/>
            <person name="Wild A."/>
            <person name="Willey D.J."/>
            <person name="Wilmer T.E."/>
            <person name="Wood J.M."/>
            <person name="Wray P.W."/>
            <person name="Wyatt J.C."/>
            <person name="Young L."/>
            <person name="Younger R.M."/>
            <person name="Bentley D.R."/>
            <person name="Coulson A."/>
            <person name="Durbin R.M."/>
            <person name="Hubbard T."/>
            <person name="Sulston J.E."/>
            <person name="Dunham I."/>
            <person name="Rogers J."/>
            <person name="Beck S."/>
        </authorList>
    </citation>
    <scope>NUCLEOTIDE SEQUENCE [LARGE SCALE GENOMIC DNA]</scope>
</reference>
<reference key="13">
    <citation type="submission" date="2005-07" db="EMBL/GenBank/DDBJ databases">
        <authorList>
            <person name="Mural R.J."/>
            <person name="Istrail S."/>
            <person name="Sutton G."/>
            <person name="Florea L."/>
            <person name="Halpern A.L."/>
            <person name="Mobarry C.M."/>
            <person name="Lippert R."/>
            <person name="Walenz B."/>
            <person name="Shatkay H."/>
            <person name="Dew I."/>
            <person name="Miller J.R."/>
            <person name="Flanigan M.J."/>
            <person name="Edwards N.J."/>
            <person name="Bolanos R."/>
            <person name="Fasulo D."/>
            <person name="Halldorsson B.V."/>
            <person name="Hannenhalli S."/>
            <person name="Turner R."/>
            <person name="Yooseph S."/>
            <person name="Lu F."/>
            <person name="Nusskern D.R."/>
            <person name="Shue B.C."/>
            <person name="Zheng X.H."/>
            <person name="Zhong F."/>
            <person name="Delcher A.L."/>
            <person name="Huson D.H."/>
            <person name="Kravitz S.A."/>
            <person name="Mouchard L."/>
            <person name="Reinert K."/>
            <person name="Remington K.A."/>
            <person name="Clark A.G."/>
            <person name="Waterman M.S."/>
            <person name="Eichler E.E."/>
            <person name="Adams M.D."/>
            <person name="Hunkapiller M.W."/>
            <person name="Myers E.W."/>
            <person name="Venter J.C."/>
        </authorList>
    </citation>
    <scope>NUCLEOTIDE SEQUENCE [LARGE SCALE GENOMIC DNA]</scope>
</reference>
<reference key="14">
    <citation type="journal article" date="2004" name="Genome Res.">
        <title>The status, quality, and expansion of the NIH full-length cDNA project: the Mammalian Gene Collection (MGC).</title>
        <authorList>
            <consortium name="The MGC Project Team"/>
        </authorList>
    </citation>
    <scope>NUCLEOTIDE SEQUENCE [LARGE SCALE MRNA]</scope>
    <scope>VARIANT ARG-31</scope>
    <source>
        <tissue>Eye</tissue>
        <tissue>Lung</tissue>
    </source>
</reference>
<reference key="15">
    <citation type="journal article" date="2004" name="Mol. Cell">
        <title>N-acetylation and ubiquitin-independent proteasomal degradation of p21(Cip1).</title>
        <authorList>
            <person name="Chen X."/>
            <person name="Chi Y."/>
            <person name="Bloecher A."/>
            <person name="Aebersold R."/>
            <person name="Clurman B.E."/>
            <person name="Roberts J.M."/>
        </authorList>
    </citation>
    <scope>PROTEIN SEQUENCE OF 2-16</scope>
    <scope>ACETYLATION AT SER-2</scope>
    <scope>IDENTIFICATION BY MASS SPECTROMETRY</scope>
</reference>
<reference key="16">
    <citation type="journal article" date="2000" name="J. Biol. Chem.">
        <title>Reversible phosphorylation at the C-terminal regulatory domain of p21(Waf1/Cip1) modulates proliferating cell nuclear antigen binding.</title>
        <authorList>
            <person name="Scott M.T."/>
            <person name="Morrice N."/>
            <person name="Ball K.L."/>
        </authorList>
    </citation>
    <scope>PROTEIN SEQUENCE OF 136-148</scope>
    <scope>PHOSPHORYLATION AT THR-145; SER-146 AND SER-160</scope>
    <scope>IDENTIFICATION BY MASS SPECTROMETRY</scope>
</reference>
<reference key="17">
    <citation type="journal article" date="1997" name="Genes Dev.">
        <title>New functional activities for the p21 family of CDK inhibitors.</title>
        <authorList>
            <person name="LaBaer J."/>
            <person name="Garrett M.D."/>
            <person name="Stevenson L.F."/>
            <person name="Slingerland J.M."/>
            <person name="Sandhu C."/>
            <person name="Chou H.S."/>
            <person name="Fattaey A."/>
            <person name="Harlow E."/>
        </authorList>
    </citation>
    <scope>FUNCTION</scope>
    <scope>SUBCELLULAR LOCATION</scope>
    <scope>INTERACTION WITH CDK4 AND CCND1 IN THE CYCLIN D-CDK4-CDKN1A COMPLEX</scope>
</reference>
<reference key="18">
    <citation type="journal article" date="2001" name="EMBO J.">
        <title>A degradation signal located in the C-terminus of p21WAF1/CIP1 is a binding site for the C8 alpha-subunit of the 20S proteasome.</title>
        <authorList>
            <person name="Touitou R."/>
            <person name="Richardson J."/>
            <person name="Bose S."/>
            <person name="Nakanishi M."/>
            <person name="Rivett J."/>
            <person name="Allday M.J."/>
        </authorList>
    </citation>
    <scope>INTERACTION WITH PSMA3</scope>
</reference>
<reference key="19">
    <citation type="journal article" date="2001" name="J. Biol. Chem.">
        <title>Mediation of proliferating cell nuclear antigen (PCNA)-dependent DNA replication through a conserved p21(Cip1)-like PCNA-binding motif present in the third subunit of human DNA polymerase delta.</title>
        <authorList>
            <person name="Ducoux M."/>
            <person name="Urbach S."/>
            <person name="Baldacci G."/>
            <person name="Huebscher U."/>
            <person name="Koundrioukoff S."/>
            <person name="Christensen J."/>
            <person name="Hughes P."/>
        </authorList>
    </citation>
    <scope>FUNCTION</scope>
    <scope>INTERACTION WITH PCNA</scope>
</reference>
<reference key="20">
    <citation type="journal article" date="2001" name="Mol. Cell. Biol.">
        <title>Akt-dependent phosphorylation of p21(Cip1) regulates PCNA binding and proliferation of endothelial cells.</title>
        <authorList>
            <person name="Roessig L."/>
            <person name="Jadidi A.S."/>
            <person name="Urbich C."/>
            <person name="Badorff C."/>
            <person name="Zeiher A.M."/>
            <person name="Dimmeler S."/>
        </authorList>
    </citation>
    <scope>PHOSPHORYLATION AT THR-145</scope>
    <scope>MUTAGENESIS OF THR-145 AND SER-146</scope>
    <scope>SUBCELLULAR LOCATION</scope>
</reference>
<reference key="21">
    <citation type="journal article" date="2002" name="Biochim. Biophys. Acta">
        <title>Phosphorylation of the cell cycle inhibitor p21Cip1/WAF1 by Pim-1 kinase.</title>
        <authorList>
            <person name="Wang Z."/>
            <person name="Bhattacharya N."/>
            <person name="Mixter P.F."/>
            <person name="Wei W."/>
            <person name="Sedivy J."/>
            <person name="Magnuson N.S."/>
        </authorList>
    </citation>
    <scope>PHOSPHORYLATION AT THR-145 BY PIM1</scope>
    <scope>SUBCELLULAR LOCATION</scope>
    <scope>INTERACTION WITH PIM1</scope>
</reference>
<reference key="22">
    <citation type="journal article" date="2004" name="Mol. Cell. Biol.">
        <title>N-Terminal ubiquitination of extracellular signal-regulated kinase 3 and p21 directs their degradation by the proteasome.</title>
        <authorList>
            <person name="Coulombe P."/>
            <person name="Rodier G."/>
            <person name="Bonneil E."/>
            <person name="Thibault P."/>
            <person name="Meloche S."/>
        </authorList>
    </citation>
    <scope>UBIQUITINATION AT SER-2</scope>
</reference>
<reference key="23">
    <citation type="journal article" date="2006" name="Mol. Cell. Biol.">
        <title>Only Akt1 is required for proliferation, while Akt2 promotes cell cycle exit through p21 binding.</title>
        <authorList>
            <person name="Heron-Milhavet L."/>
            <person name="Franckhauser C."/>
            <person name="Rana V."/>
            <person name="Berthenet C."/>
            <person name="Fisher D."/>
            <person name="Hemmings B.A."/>
            <person name="Fernandez A."/>
            <person name="Lamb N.J."/>
        </authorList>
    </citation>
    <scope>PHOSPHORYLATION AT THR-145</scope>
</reference>
<reference key="24">
    <citation type="journal article" date="2006" name="Nat. Biotechnol.">
        <title>A probability-based approach for high-throughput protein phosphorylation analysis and site localization.</title>
        <authorList>
            <person name="Beausoleil S.A."/>
            <person name="Villen J."/>
            <person name="Gerber S.A."/>
            <person name="Rush J."/>
            <person name="Gygi S.P."/>
        </authorList>
    </citation>
    <scope>PHOSPHORYLATION [LARGE SCALE ANALYSIS] AT SER-130</scope>
    <scope>IDENTIFICATION BY MASS SPECTROMETRY [LARGE SCALE ANALYSIS]</scope>
    <source>
        <tissue>Cervix carcinoma</tissue>
    </source>
</reference>
<reference key="25">
    <citation type="journal article" date="2008" name="Genes Dev.">
        <title>PCNA-dependent regulation of p21 ubiquitylation and degradation via the CRL4Cdt2 ubiquitin ligase complex.</title>
        <authorList>
            <person name="Abbas T."/>
            <person name="Sivaprasad U."/>
            <person name="Terai K."/>
            <person name="Amador V."/>
            <person name="Pagano M."/>
            <person name="Dutta A."/>
        </authorList>
    </citation>
    <scope>UBIQUITINATION</scope>
    <scope>DOMAIN PIP-BOX K+4 MOTIF</scope>
    <scope>INTERACTION WITH PCNA</scope>
    <scope>MUTAGENESIS OF SER-114 AND 144-GLN--PHE-150</scope>
    <scope>PHOSPHORYLATION AT SER-114</scope>
</reference>
<reference key="26">
    <citation type="journal article" date="2008" name="Genes Dev.">
        <title>The CRL4Cdt2 ubiquitin ligase targets the degradation of p21Cip1 to control replication licensing.</title>
        <authorList>
            <person name="Kim Y."/>
            <person name="Starostina N.G."/>
            <person name="Kipreos E.T."/>
        </authorList>
    </citation>
    <scope>UBIQUITINATION</scope>
</reference>
<reference key="27">
    <citation type="journal article" date="2008" name="J. Biol. Chem.">
        <title>CDK inhibitor p21 is degraded by a proliferating cell nuclear antigen-coupled Cul4-DDB1Cdt2 pathway during S phase and after UV irradiation.</title>
        <authorList>
            <person name="Nishitani H."/>
            <person name="Shiomi Y."/>
            <person name="Iida H."/>
            <person name="Michishita M."/>
            <person name="Takami T."/>
            <person name="Tsurimoto T."/>
        </authorList>
    </citation>
    <scope>UBIQUITINATION</scope>
    <scope>DOMAIN PIP-BOX K+4 MOTIF</scope>
    <scope>MUTAGENESIS OF 147-MET--TYR-151 AND 154-LYS--ARG-156</scope>
    <scope>INTERACTION WITH PCNA</scope>
</reference>
<reference key="28">
    <citation type="journal article" date="2008" name="Proc. Natl. Acad. Sci. U.S.A.">
        <title>A quantitative atlas of mitotic phosphorylation.</title>
        <authorList>
            <person name="Dephoure N."/>
            <person name="Zhou C."/>
            <person name="Villen J."/>
            <person name="Beausoleil S.A."/>
            <person name="Bakalarski C.E."/>
            <person name="Elledge S.J."/>
            <person name="Gygi S.P."/>
        </authorList>
    </citation>
    <scope>PHOSPHORYLATION [LARGE SCALE ANALYSIS] AT SER-130</scope>
    <scope>IDENTIFICATION BY MASS SPECTROMETRY [LARGE SCALE ANALYSIS]</scope>
    <source>
        <tissue>Cervix carcinoma</tissue>
    </source>
</reference>
<reference key="29">
    <citation type="journal article" date="2009" name="Cell Div.">
        <title>A dual role of Cdk2 in DNA damage response.</title>
        <authorList>
            <person name="Satyanarayana A."/>
            <person name="Kaldis P."/>
        </authorList>
    </citation>
    <scope>REVIEW ON DNA REPAIR</scope>
    <scope>INTERACTION WITH CDK2</scope>
</reference>
<reference key="30">
    <citation type="journal article" date="2009" name="EMBO J.">
        <title>Differential regulation of p53 and p21 by MKRN1 E3 ligase controls cell cycle arrest and apoptosis.</title>
        <authorList>
            <person name="Lee E.-W."/>
            <person name="Lee M.-S."/>
            <person name="Camus S."/>
            <person name="Ghim J."/>
            <person name="Yang M.-R."/>
            <person name="Oh W."/>
            <person name="Ha N.-C."/>
            <person name="Lane D.P."/>
            <person name="Song J."/>
        </authorList>
    </citation>
    <scope>UBIQUITINATION</scope>
    <scope>INTERACTION WITH MKRN1</scope>
</reference>
<reference key="31">
    <citation type="journal article" date="2009" name="J. Biol. Chem.">
        <title>Ionizing radiation induces ATM-independent degradation of p21Cip1 in transformed cells.</title>
        <authorList>
            <person name="Stuart S.A."/>
            <person name="Wang J.Y."/>
        </authorList>
    </citation>
    <scope>UBIQUITINATION</scope>
</reference>
<reference key="32">
    <citation type="journal article" date="2010" name="Int. J. Biochem. Cell Biol.">
        <title>Pim-2 phosphorylation of p21(Cip1/WAF1) enhances its stability and inhibits cell proliferation in HCT116 cells.</title>
        <authorList>
            <person name="Wang Z."/>
            <person name="Zhang Y."/>
            <person name="Gu J.J."/>
            <person name="Davitt C."/>
            <person name="Reeves R."/>
            <person name="Magnuson N.S."/>
        </authorList>
    </citation>
    <scope>PHOSPHORYLATION AT THR-145 BY PIM2</scope>
</reference>
<reference key="33">
    <citation type="journal article" date="2012" name="Proc. Natl. Acad. Sci. U.S.A.">
        <title>N-terminal acetylome analyses and functional insights of the N-terminal acetyltransferase NatB.</title>
        <authorList>
            <person name="Van Damme P."/>
            <person name="Lasa M."/>
            <person name="Polevoda B."/>
            <person name="Gazquez C."/>
            <person name="Elosegui-Artola A."/>
            <person name="Kim D.S."/>
            <person name="De Juan-Pardo E."/>
            <person name="Demeyer K."/>
            <person name="Hole K."/>
            <person name="Larrea E."/>
            <person name="Timmerman E."/>
            <person name="Prieto J."/>
            <person name="Arnesen T."/>
            <person name="Sherman F."/>
            <person name="Gevaert K."/>
            <person name="Aldabe R."/>
        </authorList>
    </citation>
    <scope>IDENTIFICATION BY MASS SPECTROMETRY [LARGE SCALE ANALYSIS]</scope>
</reference>
<reference key="34">
    <citation type="journal article" date="2012" name="Proc. Natl. Acad. Sci. U.S.A.">
        <title>TRIM39 regulates cell cycle progression and DNA damage responses via stabilizing p21.</title>
        <authorList>
            <person name="Zhang L."/>
            <person name="Mei Y."/>
            <person name="Fu N.Y."/>
            <person name="Guan L."/>
            <person name="Xie W."/>
            <person name="Liu H.H."/>
            <person name="Yu C.D."/>
            <person name="Yin Z."/>
            <person name="Yu V.C."/>
            <person name="You H."/>
        </authorList>
    </citation>
    <scope>FUNCTION</scope>
    <scope>INTERACTION WITH TRIM39 AND DTL</scope>
    <scope>SUBCELLULAR LOCATION</scope>
    <scope>UBIQUITINATION</scope>
    <scope>PROTEASOMAL DEGRADATION</scope>
    <scope>MUTAGENESIS OF LYS-154</scope>
</reference>
<reference key="35">
    <citation type="journal article" date="2013" name="Cell Death Differ.">
        <title>ZNF313 is a novel cell cycle activator with an E3 ligase activity inhibiting cellular senescence by destabilizing p21(WAF1.).</title>
        <authorList>
            <person name="Han J."/>
            <person name="Kim Y.L."/>
            <person name="Lee K.W."/>
            <person name="Her N.G."/>
            <person name="Ha T.K."/>
            <person name="Yoon S."/>
            <person name="Jeong S.I."/>
            <person name="Lee J.H."/>
            <person name="Kang M.J."/>
            <person name="Lee M.G."/>
            <person name="Ryu B.K."/>
            <person name="Baik J.H."/>
            <person name="Chi S.G."/>
        </authorList>
    </citation>
    <scope>UBIQUITINATION BY RNF114</scope>
</reference>
<reference key="36">
    <citation type="journal article" date="2014" name="PLoS Genet.">
        <title>A mouse model uncovers LKB1 as an UVB-induced DNA damage sensor mediating CDKN1A (p21WAF1/CIP1) degradation.</title>
        <authorList>
            <person name="Esteve-Puig R."/>
            <person name="Gil R."/>
            <person name="Gonzalez-Sanchez E."/>
            <person name="Bech-Serra J.J."/>
            <person name="Grueso J."/>
            <person name="Hernandez-Losa J."/>
            <person name="Moline T."/>
            <person name="Canals F."/>
            <person name="Ferrer B."/>
            <person name="Cortes J."/>
            <person name="Bastian B."/>
            <person name="Cajal S.R.Y."/>
            <person name="Martin-Caballero J."/>
            <person name="Flores J.M."/>
            <person name="Vivancos A."/>
            <person name="Garcia-Patos V."/>
            <person name="Recio J.A."/>
        </authorList>
    </citation>
    <scope>FUNCTION</scope>
    <scope>INTERACTION WITH STK11 AND NUAK1</scope>
    <scope>PHOSPHORYLATION AT THR-80 AND SER-146</scope>
    <scope>MUTAGENESIS OF THR-80 AND SER-146</scope>
</reference>
<reference key="37">
    <citation type="journal article" date="1996" name="Cell">
        <title>Structure of the C-terminal region of p21(WAF1/CIP1) complexed with human PCNA.</title>
        <authorList>
            <person name="Gulbis J.M."/>
            <person name="Kelman Z."/>
            <person name="Hurwitz J."/>
            <person name="O'Donnell M."/>
            <person name="Kuriyan J."/>
        </authorList>
    </citation>
    <scope>X-RAY CRYSTALLOGRAPHY (2.6 ANGSTROMS) OF 139-160 IN COMPLEX WITH PCNA</scope>
</reference>
<comment type="function">
    <text evidence="2 8 22 25">Plays an important role in controlling cell cycle progression and DNA damage-induced G2 arrest (PubMed:9106657). Involved in p53/TP53 mediated inhibition of cellular proliferation in response to DNA damage. Also involved in p53-independent DNA damage-induced G2 arrest mediated by CREB3L1 in astrocytes and osteoblasts (By similarity). Binds to and inhibits cyclin-dependent kinase activity, preventing phosphorylation of critical cyclin-dependent kinase substrates and blocking cell cycle progression. Functions in the nuclear localization and assembly of cyclin D-CDK4 complex and promotes its kinase activity towards RB1. At higher stoichiometric ratios, inhibits the kinase activity of the cyclin D-CDK4 complex. Inhibits DNA synthesis by DNA polymerase delta by competing with POLD3 for PCNA binding (PubMed:11595739). Negatively regulates the CDK4- and CDK6-driven phosphorylation of RB1 in keratinocytes, thereby resulting in the release of E2F1 and subsequent transcription of E2F1-driven G1/S phase promoting genes (By similarity).</text>
</comment>
<comment type="subunit">
    <text evidence="2 6 8 9 14 15 16 17 19 20 24 25">Interacts with HDAC1; the interaction is prevented by competitive binding of C10orf90/FATS to HDAC1 facilitating acetylation and protein stabilization of CDKN1A/p21 (By similarity). Interacts with MKRN1 (PubMed:19536131). Interacts with PSMA3 (PubMed:11350925). Interacts with PCNA (PubMed:11595739, PubMed:18703516, PubMed:18794347, PubMed:8861913). Component of the ternary complex, cyclin D-CDK4-CDKN1A. Interacts (via its N-terminal domain) with CDK4; the interaction promotes the assembly of the cyclin D-CDK4 complex, its nuclear translocation and promotes the cyclin D-dependent enzyme activity of CDK4 (PubMed:9106657). Binding to CDK2 leads to CDK2/cyclin E inactivation at the G1-S phase DNA damage checkpoint, thereby arresting cells at the G1-S transition during DNA repair (PubMed:19445729). Interacts with PIM1 (PubMed:12431783). Interacts with STK11 and NUAK1 (PubMed:25329316). Interacts wih DTL (PubMed:23213251). Interacts with isoform 1 and isoform 2 of TRIM39 (PubMed:23213251). Interacts with PKP3; the interaction sequesters CDKN1A to the cytoplasm thereby repressing its role as an inhibitor of CDK4- and CDK6-driven RB1 phosphorylation (By similarity).</text>
</comment>
<comment type="interaction">
    <interactant intactId="EBI-375077">
        <id>P38936</id>
    </interactant>
    <interactant intactId="EBI-375065">
        <id>P78396</id>
        <label>CCNA1</label>
    </interactant>
    <organismsDiffer>false</organismsDiffer>
    <experiments>8</experiments>
</comment>
<comment type="interaction">
    <interactant intactId="EBI-375077">
        <id>P38936</id>
    </interactant>
    <interactant intactId="EBI-457097">
        <id>P20248</id>
        <label>CCNA2</label>
    </interactant>
    <organismsDiffer>false</organismsDiffer>
    <experiments>8</experiments>
</comment>
<comment type="interaction">
    <interactant intactId="EBI-375077">
        <id>P38936</id>
    </interactant>
    <interactant intactId="EBI-375024">
        <id>O95067</id>
        <label>CCNB2</label>
    </interactant>
    <organismsDiffer>false</organismsDiffer>
    <experiments>2</experiments>
</comment>
<comment type="interaction">
    <interactant intactId="EBI-375077">
        <id>P38936</id>
    </interactant>
    <interactant intactId="EBI-375001">
        <id>P24385</id>
        <label>CCND1</label>
    </interactant>
    <organismsDiffer>false</organismsDiffer>
    <experiments>25</experiments>
</comment>
<comment type="interaction">
    <interactant intactId="EBI-375077">
        <id>P38936</id>
    </interactant>
    <interactant intactId="EBI-748789">
        <id>P30279</id>
        <label>CCND2</label>
    </interactant>
    <organismsDiffer>false</organismsDiffer>
    <experiments>19</experiments>
</comment>
<comment type="interaction">
    <interactant intactId="EBI-375077">
        <id>P38936</id>
    </interactant>
    <interactant intactId="EBI-375013">
        <id>P30281</id>
        <label>CCND3</label>
    </interactant>
    <organismsDiffer>false</organismsDiffer>
    <experiments>29</experiments>
</comment>
<comment type="interaction">
    <interactant intactId="EBI-375077">
        <id>P38936</id>
    </interactant>
    <interactant intactId="EBI-519526">
        <id>P24864</id>
        <label>CCNE1</label>
    </interactant>
    <organismsDiffer>false</organismsDiffer>
    <experiments>11</experiments>
</comment>
<comment type="interaction">
    <interactant intactId="EBI-375077">
        <id>P38936</id>
    </interactant>
    <interactant intactId="EBI-375033">
        <id>O96020</id>
        <label>CCNE2</label>
    </interactant>
    <organismsDiffer>false</organismsDiffer>
    <experiments>8</experiments>
</comment>
<comment type="interaction">
    <interactant intactId="EBI-375077">
        <id>P38936</id>
    </interactant>
    <interactant intactId="EBI-374969">
        <id>O75419</id>
        <label>CDC45</label>
    </interactant>
    <organismsDiffer>false</organismsDiffer>
    <experiments>2</experiments>
</comment>
<comment type="interaction">
    <interactant intactId="EBI-375077">
        <id>P38936</id>
    </interactant>
    <interactant intactId="EBI-374862">
        <id>Q99741</id>
        <label>CDC6</label>
    </interactant>
    <organismsDiffer>false</organismsDiffer>
    <experiments>2</experiments>
</comment>
<comment type="interaction">
    <interactant intactId="EBI-375077">
        <id>P38936</id>
    </interactant>
    <interactant intactId="EBI-444308">
        <id>P06493</id>
        <label>CDK1</label>
    </interactant>
    <organismsDiffer>false</organismsDiffer>
    <experiments>10</experiments>
</comment>
<comment type="interaction">
    <interactant intactId="EBI-375077">
        <id>P38936</id>
    </interactant>
    <interactant intactId="EBI-1043945">
        <id>O94921</id>
        <label>CDK14</label>
    </interactant>
    <organismsDiffer>false</organismsDiffer>
    <experiments>11</experiments>
</comment>
<comment type="interaction">
    <interactant intactId="EBI-375077">
        <id>P38936</id>
    </interactant>
    <interactant intactId="EBI-375096">
        <id>P24941</id>
        <label>CDK2</label>
    </interactant>
    <organismsDiffer>false</organismsDiffer>
    <experiments>31</experiments>
</comment>
<comment type="interaction">
    <interactant intactId="EBI-375077">
        <id>P38936</id>
    </interactant>
    <interactant intactId="EBI-1245761">
        <id>Q00526</id>
        <label>CDK3</label>
    </interactant>
    <organismsDiffer>false</organismsDiffer>
    <experiments>8</experiments>
</comment>
<comment type="interaction">
    <interactant intactId="EBI-375077">
        <id>P38936</id>
    </interactant>
    <interactant intactId="EBI-295644">
        <id>P11802</id>
        <label>CDK4</label>
    </interactant>
    <organismsDiffer>false</organismsDiffer>
    <experiments>10</experiments>
</comment>
<comment type="interaction">
    <interactant intactId="EBI-375077">
        <id>P38936</id>
    </interactant>
    <interactant intactId="EBI-1041567">
        <id>Q00535</id>
        <label>CDK5</label>
    </interactant>
    <organismsDiffer>false</organismsDiffer>
    <experiments>7</experiments>
</comment>
<comment type="interaction">
    <interactant intactId="EBI-375077">
        <id>P38936</id>
    </interactant>
    <interactant intactId="EBI-295663">
        <id>Q00534</id>
        <label>CDK6</label>
    </interactant>
    <organismsDiffer>false</organismsDiffer>
    <experiments>4</experiments>
</comment>
<comment type="interaction">
    <interactant intactId="EBI-375077">
        <id>P38936</id>
    </interactant>
    <interactant intactId="EBI-10976677">
        <id>G5E9A7</id>
        <label>DMWD</label>
    </interactant>
    <organismsDiffer>false</organismsDiffer>
    <experiments>3</experiments>
</comment>
<comment type="interaction">
    <interactant intactId="EBI-375077">
        <id>P38936</id>
    </interactant>
    <interactant intactId="EBI-1054228">
        <id>P41091</id>
        <label>EIF2S3</label>
    </interactant>
    <organismsDiffer>false</organismsDiffer>
    <experiments>3</experiments>
</comment>
<comment type="interaction">
    <interactant intactId="EBI-375077">
        <id>P38936</id>
    </interactant>
    <interactant intactId="EBI-25852368">
        <id>O75460-2</id>
        <label>ERN1</label>
    </interactant>
    <organismsDiffer>false</organismsDiffer>
    <experiments>3</experiments>
</comment>
<comment type="interaction">
    <interactant intactId="EBI-375077">
        <id>P38936</id>
    </interactant>
    <interactant intactId="EBI-348399">
        <id>P22607</id>
        <label>FGFR3</label>
    </interactant>
    <organismsDiffer>false</organismsDiffer>
    <experiments>3</experiments>
</comment>
<comment type="interaction">
    <interactant intactId="EBI-375077">
        <id>P38936</id>
    </interactant>
    <interactant intactId="EBI-10226858">
        <id>Q0VDC6</id>
        <label>FKBP1A</label>
    </interactant>
    <organismsDiffer>false</organismsDiffer>
    <experiments>3</experiments>
</comment>
<comment type="interaction">
    <interactant intactId="EBI-375077">
        <id>P38936</id>
    </interactant>
    <interactant intactId="EBI-744935">
        <id>Q9BVV2</id>
        <label>FNDC11</label>
    </interactant>
    <organismsDiffer>false</organismsDiffer>
    <experiments>3</experiments>
</comment>
<comment type="interaction">
    <interactant intactId="EBI-375077">
        <id>P38936</id>
    </interactant>
    <interactant intactId="EBI-618309">
        <id>Q08379</id>
        <label>GOLGA2</label>
    </interactant>
    <organismsDiffer>false</organismsDiffer>
    <experiments>3</experiments>
</comment>
<comment type="interaction">
    <interactant intactId="EBI-375077">
        <id>P38936</id>
    </interactant>
    <interactant intactId="EBI-351506">
        <id>P06396</id>
        <label>GSN</label>
    </interactant>
    <organismsDiffer>false</organismsDiffer>
    <experiments>3</experiments>
</comment>
<comment type="interaction">
    <interactant intactId="EBI-375077">
        <id>P38936</id>
    </interactant>
    <interactant intactId="EBI-10961706">
        <id>Q96ED9-2</id>
        <label>HOOK2</label>
    </interactant>
    <organismsDiffer>false</organismsDiffer>
    <experiments>3</experiments>
</comment>
<comment type="interaction">
    <interactant intactId="EBI-375077">
        <id>P38936</id>
    </interactant>
    <interactant intactId="EBI-747204">
        <id>Q9UKT9</id>
        <label>IKZF3</label>
    </interactant>
    <organismsDiffer>false</organismsDiffer>
    <experiments>3</experiments>
</comment>
<comment type="interaction">
    <interactant intactId="EBI-375077">
        <id>P38936</id>
    </interactant>
    <interactant intactId="EBI-6509505">
        <id>Q0VD86</id>
        <label>INCA1</label>
    </interactant>
    <organismsDiffer>false</organismsDiffer>
    <experiments>3</experiments>
</comment>
<comment type="interaction">
    <interactant intactId="EBI-375077">
        <id>P38936</id>
    </interactant>
    <interactant intactId="EBI-14069005">
        <id>Q9BVG8-5</id>
        <label>KIFC3</label>
    </interactant>
    <organismsDiffer>false</organismsDiffer>
    <experiments>3</experiments>
</comment>
<comment type="interaction">
    <interactant intactId="EBI-375077">
        <id>P38936</id>
    </interactant>
    <interactant intactId="EBI-948001">
        <id>Q15323</id>
        <label>KRT31</label>
    </interactant>
    <organismsDiffer>false</organismsDiffer>
    <experiments>6</experiments>
</comment>
<comment type="interaction">
    <interactant intactId="EBI-375077">
        <id>P38936</id>
    </interactant>
    <interactant intactId="EBI-9996449">
        <id>Q9BYR8</id>
        <label>KRTAP3-1</label>
    </interactant>
    <organismsDiffer>false</organismsDiffer>
    <experiments>3</experiments>
</comment>
<comment type="interaction">
    <interactant intactId="EBI-375077">
        <id>P38936</id>
    </interactant>
    <interactant intactId="EBI-18273118">
        <id>Q9P2M1</id>
        <label>LRP2BP</label>
    </interactant>
    <organismsDiffer>false</organismsDiffer>
    <experiments>3</experiments>
</comment>
<comment type="interaction">
    <interactant intactId="EBI-375077">
        <id>P38936</id>
    </interactant>
    <interactant intactId="EBI-741037">
        <id>Q9BRK4</id>
        <label>LZTS2</label>
    </interactant>
    <organismsDiffer>false</organismsDiffer>
    <experiments>3</experiments>
</comment>
<comment type="interaction">
    <interactant intactId="EBI-375077">
        <id>P38936</id>
    </interactant>
    <interactant intactId="EBI-16439278">
        <id>Q6FHY5</id>
        <label>MEOX2</label>
    </interactant>
    <organismsDiffer>false</organismsDiffer>
    <experiments>3</experiments>
</comment>
<comment type="interaction">
    <interactant intactId="EBI-375077">
        <id>P38936</id>
    </interactant>
    <interactant intactId="EBI-373524">
        <id>Q9UHC7</id>
        <label>MKRN1</label>
    </interactant>
    <organismsDiffer>false</organismsDiffer>
    <experiments>5</experiments>
</comment>
<comment type="interaction">
    <interactant intactId="EBI-375077">
        <id>P38936</id>
    </interactant>
    <interactant intactId="EBI-11522433">
        <id>Q5JR59-3</id>
        <label>MTUS2</label>
    </interactant>
    <organismsDiffer>false</organismsDiffer>
    <experiments>3</experiments>
</comment>
<comment type="interaction">
    <interactant intactId="EBI-375077">
        <id>P38936</id>
    </interactant>
    <interactant intactId="EBI-2120336">
        <id>Q9BQ15</id>
        <label>NABP2</label>
    </interactant>
    <organismsDiffer>false</organismsDiffer>
    <experiments>7</experiments>
</comment>
<comment type="interaction">
    <interactant intactId="EBI-375077">
        <id>P38936</id>
    </interactant>
    <interactant intactId="EBI-358311">
        <id>P12004</id>
        <label>PCNA</label>
    </interactant>
    <organismsDiffer>false</organismsDiffer>
    <experiments>39</experiments>
</comment>
<comment type="interaction">
    <interactant intactId="EBI-375077">
        <id>P38936</id>
    </interactant>
    <interactant intactId="EBI-8469539">
        <id>Q6FI35</id>
        <label>PCNA</label>
    </interactant>
    <organismsDiffer>false</organismsDiffer>
    <experiments>2</experiments>
</comment>
<comment type="interaction">
    <interactant intactId="EBI-375077">
        <id>P38936</id>
    </interactant>
    <interactant intactId="EBI-2805516">
        <id>P31321</id>
        <label>PRKAR1B</label>
    </interactant>
    <organismsDiffer>false</organismsDiffer>
    <experiments>3</experiments>
</comment>
<comment type="interaction">
    <interactant intactId="EBI-375077">
        <id>P38936</id>
    </interactant>
    <interactant intactId="EBI-10829018">
        <id>Q04864-2</id>
        <label>REL</label>
    </interactant>
    <organismsDiffer>false</organismsDiffer>
    <experiments>3</experiments>
</comment>
<comment type="interaction">
    <interactant intactId="EBI-375077">
        <id>P38936</id>
    </interactant>
    <interactant intactId="EBI-1053431">
        <id>P49591</id>
        <label>SARS1</label>
    </interactant>
    <organismsDiffer>false</organismsDiffer>
    <experiments>3</experiments>
</comment>
<comment type="interaction">
    <interactant intactId="EBI-375077">
        <id>P38936</id>
    </interactant>
    <interactant intactId="EBI-16087037">
        <id>Q9UQR0-1</id>
        <label>SCML2</label>
    </interactant>
    <organismsDiffer>false</organismsDiffer>
    <experiments>3</experiments>
</comment>
<comment type="interaction">
    <interactant intactId="EBI-375077">
        <id>P38936</id>
    </interactant>
    <interactant intactId="EBI-12037847">
        <id>Q6ZSJ9</id>
        <label>SHISA6</label>
    </interactant>
    <organismsDiffer>false</organismsDiffer>
    <experiments>3</experiments>
</comment>
<comment type="interaction">
    <interactant intactId="EBI-375077">
        <id>P38936</id>
    </interactant>
    <interactant intactId="EBI-1054981">
        <id>Q96FS4</id>
        <label>SIPA1</label>
    </interactant>
    <organismsDiffer>false</organismsDiffer>
    <experiments>2</experiments>
</comment>
<comment type="interaction">
    <interactant intactId="EBI-375077">
        <id>P38936</id>
    </interactant>
    <interactant intactId="EBI-307486">
        <id>P63208</id>
        <label>SKP1</label>
    </interactant>
    <organismsDiffer>false</organismsDiffer>
    <experiments>3</experiments>
</comment>
<comment type="interaction">
    <interactant intactId="EBI-375077">
        <id>P38936</id>
    </interactant>
    <interactant intactId="EBI-456291">
        <id>Q13309</id>
        <label>SKP2</label>
    </interactant>
    <organismsDiffer>false</organismsDiffer>
    <experiments>4</experiments>
</comment>
<comment type="interaction">
    <interactant intactId="EBI-375077">
        <id>P38936</id>
    </interactant>
    <interactant intactId="EBI-5235340">
        <id>Q7Z699</id>
        <label>SPRED1</label>
    </interactant>
    <organismsDiffer>false</organismsDiffer>
    <experiments>4</experiments>
</comment>
<comment type="interaction">
    <interactant intactId="EBI-375077">
        <id>P38936</id>
    </interactant>
    <interactant intactId="EBI-1186119">
        <id>P51692</id>
        <label>STAT5B</label>
    </interactant>
    <organismsDiffer>false</organismsDiffer>
    <experiments>3</experiments>
</comment>
<comment type="interaction">
    <interactant intactId="EBI-375077">
        <id>P38936</id>
    </interactant>
    <interactant intactId="EBI-533224">
        <id>P15884</id>
        <label>TCF4</label>
    </interactant>
    <organismsDiffer>false</organismsDiffer>
    <experiments>3</experiments>
</comment>
<comment type="interaction">
    <interactant intactId="EBI-375077">
        <id>P38936</id>
    </interactant>
    <interactant intactId="EBI-742397">
        <id>Q8IYF3</id>
        <label>TEX11</label>
    </interactant>
    <organismsDiffer>false</organismsDiffer>
    <experiments>4</experiments>
</comment>
<comment type="interaction">
    <interactant intactId="EBI-375077">
        <id>P38936</id>
    </interactant>
    <interactant intactId="EBI-1105213">
        <id>Q9UBB9</id>
        <label>TFIP11</label>
    </interactant>
    <organismsDiffer>false</organismsDiffer>
    <experiments>3</experiments>
</comment>
<comment type="interaction">
    <interactant intactId="EBI-375077">
        <id>P38936</id>
    </interactant>
    <interactant intactId="EBI-366083">
        <id>P04637</id>
        <label>TP53</label>
    </interactant>
    <organismsDiffer>false</organismsDiffer>
    <experiments>5</experiments>
</comment>
<comment type="interaction">
    <interactant intactId="EBI-375077">
        <id>P38936</id>
    </interactant>
    <interactant intactId="EBI-359224">
        <id>Q13077</id>
        <label>TRAF1</label>
    </interactant>
    <organismsDiffer>false</organismsDiffer>
    <experiments>3</experiments>
</comment>
<comment type="interaction">
    <interactant intactId="EBI-375077">
        <id>P38936</id>
    </interactant>
    <interactant intactId="EBI-2130429">
        <id>Q9BYV2</id>
        <label>TRIM54</label>
    </interactant>
    <organismsDiffer>false</organismsDiffer>
    <experiments>6</experiments>
</comment>
<comment type="interaction">
    <interactant intactId="EBI-375077">
        <id>P38936</id>
    </interactant>
    <interactant intactId="EBI-741480">
        <id>Q9UMX0</id>
        <label>UBQLN1</label>
    </interactant>
    <organismsDiffer>false</organismsDiffer>
    <experiments>3</experiments>
</comment>
<comment type="interaction">
    <interactant intactId="EBI-375077">
        <id>P38936</id>
    </interactant>
    <interactant intactId="EBI-739895">
        <id>Q8N6Y0</id>
        <label>USHBP1</label>
    </interactant>
    <organismsDiffer>false</organismsDiffer>
    <experiments>3</experiments>
</comment>
<comment type="interaction">
    <interactant intactId="EBI-375077">
        <id>P38936</id>
    </interactant>
    <interactant intactId="EBI-25900580">
        <id>Q9Y649</id>
    </interactant>
    <organismsDiffer>false</organismsDiffer>
    <experiments>3</experiments>
</comment>
<comment type="interaction">
    <interactant intactId="EBI-375077">
        <id>P38936</id>
    </interactant>
    <interactant intactId="EBI-6377335">
        <id>PRO_0000037566</id>
        <dbReference type="UniProtKB" id="P27958"/>
    </interactant>
    <organismsDiffer>true</organismsDiffer>
    <experiments>3</experiments>
</comment>
<comment type="subcellular location">
    <subcellularLocation>
        <location evidence="7">Cytoplasm</location>
    </subcellularLocation>
    <subcellularLocation>
        <location evidence="7 19">Nucleus</location>
    </subcellularLocation>
</comment>
<comment type="tissue specificity">
    <text>Expressed in all adult tissues, with 5-fold lower levels observed in the brain.</text>
</comment>
<comment type="induction">
    <text evidence="22 23">Activated by p53/TP53, mezerein (antileukemic compound) and IFNB1. Repressed by HDAC1.</text>
</comment>
<comment type="domain">
    <text>The PIP-box K+4 motif mediates both the interaction with PCNA and the recruitment of the DCX(DTL) complex: while the PIP-box interacts with PCNA, the presence of the K+4 submotif, recruits the DCX(DTL) complex, leading to its ubiquitination.</text>
</comment>
<comment type="domain">
    <text>The C-terminal is required for nuclear localization of the cyclin D-CDK4 complex.</text>
</comment>
<comment type="PTM">
    <text evidence="5 7 9 13 15 18 20">Phosphorylation of Thr-145 by Akt or of Ser-146 by PKC impairs binding to PCNA. Phosphorylation at Ser-114 by GSK3-beta enhances ubiquitination by the DCX(DTL) complex. Phosphorylation of Thr-145 by PIM2 enhances CDKN1A stability and inhibits cell proliferation. Phosphorylation of Thr-145 by PIM1 results in the relocation of CDKN1A to the cytoplasm and enhanced CDKN1A protein stability. UV radiation-induced phosphorylation at Thr-80 by LKB1 and at Ser-146 by NUAK1 leads to its degradation.</text>
</comment>
<comment type="PTM">
    <text evidence="10 19">Ubiquitinated by MKRN1; leading to polyubiquitination and 26S proteasome-dependent degradation. Ubiquitinated by the DCX(DTL) complex, also named CRL4(CDT2) complex, leading to its degradation during S phase or following UV irradiation. Ubiquitination by the DCX(DTL) complex is essential to control replication licensing and is PCNA-dependent: interacts with PCNA via its PIP-box, while the presence of the containing the 'K+4' motif in the PIP box, recruit the DCX(DTL) complex, leading to its degradation. Ubiquitination at Ser-2 leads to degradation by the proteasome pathway. Ubiquitinated by RNF114; leading to proteasomal degradation.</text>
</comment>
<comment type="PTM">
    <text evidence="1">Acetylation leads to protein stability. Acetylated in vitro on Lys-141, Lys-154, Lys-161 and Lys-163. Deacetylation by HDAC1 is prevented by competitive binding of C10orf90/FATS to HDAC1 (By similarity).</text>
</comment>
<comment type="similarity">
    <text evidence="27">Belongs to the CDI family.</text>
</comment>
<comment type="sequence caution" evidence="27">
    <conflict type="erroneous initiation">
        <sequence resource="EMBL-CDS" id="AAB59559"/>
    </conflict>
    <text>Extended N-terminus.</text>
</comment>
<comment type="sequence caution" evidence="27">
    <conflict type="erroneous initiation">
        <sequence resource="EMBL-CDS" id="AAB59560"/>
    </conflict>
    <text>Extended N-terminus.</text>
</comment>
<comment type="online information" name="Atlas of Genetics and Cytogenetics in Oncology and Haematology">
    <link uri="https://atlasgeneticsoncology.org/gene/139/CDKN1A"/>
</comment>
<keyword id="KW-0002">3D-structure</keyword>
<keyword id="KW-0007">Acetylation</keyword>
<keyword id="KW-0131">Cell cycle</keyword>
<keyword id="KW-0963">Cytoplasm</keyword>
<keyword id="KW-0903">Direct protein sequencing</keyword>
<keyword id="KW-0479">Metal-binding</keyword>
<keyword id="KW-0539">Nucleus</keyword>
<keyword id="KW-0597">Phosphoprotein</keyword>
<keyword id="KW-0649">Protein kinase inhibitor</keyword>
<keyword id="KW-1267">Proteomics identification</keyword>
<keyword id="KW-1185">Reference proteome</keyword>
<keyword id="KW-0832">Ubl conjugation</keyword>
<keyword id="KW-0862">Zinc</keyword>
<keyword id="KW-0863">Zinc-finger</keyword>
<dbReference type="EMBL" id="L25610">
    <property type="protein sequence ID" value="AAA16109.1"/>
    <property type="molecule type" value="mRNA"/>
</dbReference>
<dbReference type="EMBL" id="S67388">
    <property type="protein sequence ID" value="AAB29246.1"/>
    <property type="molecule type" value="mRNA"/>
</dbReference>
<dbReference type="EMBL" id="U09579">
    <property type="protein sequence ID" value="AAA85641.1"/>
    <property type="molecule type" value="mRNA"/>
</dbReference>
<dbReference type="EMBL" id="U03106">
    <property type="protein sequence ID" value="AAC04313.1"/>
    <property type="molecule type" value="mRNA"/>
</dbReference>
<dbReference type="EMBL" id="L26165">
    <property type="protein sequence ID" value="AAA19811.1"/>
    <property type="molecule type" value="mRNA"/>
</dbReference>
<dbReference type="EMBL" id="L47232">
    <property type="protein sequence ID" value="AAB59559.1"/>
    <property type="status" value="ALT_INIT"/>
    <property type="molecule type" value="mRNA"/>
</dbReference>
<dbReference type="EMBL" id="L47233">
    <property type="protein sequence ID" value="AAB59560.1"/>
    <property type="status" value="ALT_INIT"/>
    <property type="molecule type" value="mRNA"/>
</dbReference>
<dbReference type="EMBL" id="AF497972">
    <property type="protein sequence ID" value="AAM11787.1"/>
    <property type="molecule type" value="Genomic_DNA"/>
</dbReference>
<dbReference type="EMBL" id="BT006719">
    <property type="protein sequence ID" value="AAP35365.1"/>
    <property type="molecule type" value="mRNA"/>
</dbReference>
<dbReference type="EMBL" id="AB451290">
    <property type="protein sequence ID" value="BAG70104.1"/>
    <property type="molecule type" value="mRNA"/>
</dbReference>
<dbReference type="EMBL" id="AB451422">
    <property type="protein sequence ID" value="BAG70236.1"/>
    <property type="molecule type" value="mRNA"/>
</dbReference>
<dbReference type="EMBL" id="CR536533">
    <property type="protein sequence ID" value="CAG38770.1"/>
    <property type="molecule type" value="mRNA"/>
</dbReference>
<dbReference type="EMBL" id="Z85996">
    <property type="status" value="NOT_ANNOTATED_CDS"/>
    <property type="molecule type" value="Genomic_DNA"/>
</dbReference>
<dbReference type="EMBL" id="CH471081">
    <property type="protein sequence ID" value="EAX03904.1"/>
    <property type="molecule type" value="Genomic_DNA"/>
</dbReference>
<dbReference type="EMBL" id="BC000275">
    <property type="protein sequence ID" value="AAH00275.1"/>
    <property type="molecule type" value="mRNA"/>
</dbReference>
<dbReference type="EMBL" id="BC000312">
    <property type="protein sequence ID" value="AAH00312.1"/>
    <property type="molecule type" value="mRNA"/>
</dbReference>
<dbReference type="EMBL" id="BC001935">
    <property type="protein sequence ID" value="AAH01935.1"/>
    <property type="molecule type" value="mRNA"/>
</dbReference>
<dbReference type="EMBL" id="BC013967">
    <property type="protein sequence ID" value="AAH13967.1"/>
    <property type="molecule type" value="mRNA"/>
</dbReference>
<dbReference type="CCDS" id="CCDS4824.1"/>
<dbReference type="PIR" id="I54380">
    <property type="entry name" value="I54380"/>
</dbReference>
<dbReference type="PIR" id="I68674">
    <property type="entry name" value="I68674"/>
</dbReference>
<dbReference type="RefSeq" id="NP_000380.1">
    <property type="nucleotide sequence ID" value="NM_000389.5"/>
</dbReference>
<dbReference type="RefSeq" id="NP_001207706.1">
    <property type="nucleotide sequence ID" value="NM_001220777.2"/>
</dbReference>
<dbReference type="RefSeq" id="NP_001207707.1">
    <property type="nucleotide sequence ID" value="NM_001220778.2"/>
</dbReference>
<dbReference type="RefSeq" id="NP_001278478.1">
    <property type="nucleotide sequence ID" value="NM_001291549.1"/>
</dbReference>
<dbReference type="RefSeq" id="NP_001361442.1">
    <property type="nucleotide sequence ID" value="NM_001374513.1"/>
</dbReference>
<dbReference type="RefSeq" id="NP_510867.1">
    <property type="nucleotide sequence ID" value="NM_078467.3"/>
</dbReference>
<dbReference type="PDB" id="1AXC">
    <property type="method" value="X-ray"/>
    <property type="resolution" value="2.60 A"/>
    <property type="chains" value="B/D/F=139-160"/>
</dbReference>
<dbReference type="PDB" id="2ZVV">
    <property type="method" value="X-ray"/>
    <property type="resolution" value="2.00 A"/>
    <property type="chains" value="X/Y=139-160"/>
</dbReference>
<dbReference type="PDB" id="2ZVW">
    <property type="method" value="X-ray"/>
    <property type="resolution" value="2.50 A"/>
    <property type="chains" value="I/J/K/L/M/N/O/P=139-160"/>
</dbReference>
<dbReference type="PDB" id="4RJF">
    <property type="method" value="X-ray"/>
    <property type="resolution" value="2.01 A"/>
    <property type="chains" value="B/D/F=139-160"/>
</dbReference>
<dbReference type="PDB" id="5E0U">
    <property type="method" value="X-ray"/>
    <property type="resolution" value="1.93 A"/>
    <property type="chains" value="D/E/F=139-160"/>
</dbReference>
<dbReference type="PDB" id="6CBI">
    <property type="method" value="X-ray"/>
    <property type="resolution" value="2.75 A"/>
    <property type="chains" value="H/I/J/K=139-152"/>
</dbReference>
<dbReference type="PDB" id="6CEJ">
    <property type="method" value="NMR"/>
    <property type="chains" value="A=139-152"/>
</dbReference>
<dbReference type="PDB" id="6CIV">
    <property type="method" value="NMR"/>
    <property type="chains" value="C=139-152"/>
</dbReference>
<dbReference type="PDB" id="6CIX">
    <property type="method" value="NMR"/>
    <property type="chains" value="B=139-152"/>
</dbReference>
<dbReference type="PDB" id="6P8H">
    <property type="method" value="X-ray"/>
    <property type="resolution" value="3.19 A"/>
    <property type="chains" value="C=9-85"/>
</dbReference>
<dbReference type="PDB" id="7KQ0">
    <property type="method" value="X-ray"/>
    <property type="resolution" value="2.40 A"/>
    <property type="chains" value="B/D/F=141-155"/>
</dbReference>
<dbReference type="PDB" id="7KQ1">
    <property type="method" value="X-ray"/>
    <property type="resolution" value="3.30 A"/>
    <property type="chains" value="B/D/F=141-155"/>
</dbReference>
<dbReference type="PDB" id="8GJF">
    <property type="method" value="X-ray"/>
    <property type="resolution" value="2.00 A"/>
    <property type="chains" value="D/E/F=141-155"/>
</dbReference>
<dbReference type="PDBsum" id="1AXC"/>
<dbReference type="PDBsum" id="2ZVV"/>
<dbReference type="PDBsum" id="2ZVW"/>
<dbReference type="PDBsum" id="4RJF"/>
<dbReference type="PDBsum" id="5E0U"/>
<dbReference type="PDBsum" id="6CBI"/>
<dbReference type="PDBsum" id="6CEJ"/>
<dbReference type="PDBsum" id="6CIV"/>
<dbReference type="PDBsum" id="6CIX"/>
<dbReference type="PDBsum" id="6P8H"/>
<dbReference type="PDBsum" id="7KQ0"/>
<dbReference type="PDBsum" id="7KQ1"/>
<dbReference type="PDBsum" id="8GJF"/>
<dbReference type="BMRB" id="P38936"/>
<dbReference type="SMR" id="P38936"/>
<dbReference type="BioGRID" id="107460">
    <property type="interactions" value="366"/>
</dbReference>
<dbReference type="CORUM" id="P38936"/>
<dbReference type="DIP" id="DIP-246N"/>
<dbReference type="FunCoup" id="P38936">
    <property type="interactions" value="1628"/>
</dbReference>
<dbReference type="IntAct" id="P38936">
    <property type="interactions" value="228"/>
</dbReference>
<dbReference type="MINT" id="P38936"/>
<dbReference type="STRING" id="9606.ENSP00000384849"/>
<dbReference type="BindingDB" id="P38936"/>
<dbReference type="ChEMBL" id="CHEMBL5021"/>
<dbReference type="DrugBank" id="DB01169">
    <property type="generic name" value="Arsenic trioxide"/>
</dbReference>
<dbReference type="DrugBank" id="DB00313">
    <property type="generic name" value="Valproic acid"/>
</dbReference>
<dbReference type="MoonDB" id="P38936">
    <property type="type" value="Predicted"/>
</dbReference>
<dbReference type="GlyGen" id="P38936">
    <property type="glycosylation" value="2 sites, 1 O-linked glycan (1 site)"/>
</dbReference>
<dbReference type="iPTMnet" id="P38936"/>
<dbReference type="PhosphoSitePlus" id="P38936"/>
<dbReference type="BioMuta" id="CDKN1A"/>
<dbReference type="DMDM" id="729143"/>
<dbReference type="jPOST" id="P38936"/>
<dbReference type="MassIVE" id="P38936"/>
<dbReference type="PaxDb" id="9606-ENSP00000384849"/>
<dbReference type="PeptideAtlas" id="P38936"/>
<dbReference type="ProteomicsDB" id="55307"/>
<dbReference type="Pumba" id="P38936"/>
<dbReference type="Antibodypedia" id="3757">
    <property type="antibodies" value="2484 antibodies from 47 providers"/>
</dbReference>
<dbReference type="CPTC" id="P38936">
    <property type="antibodies" value="1 antibody"/>
</dbReference>
<dbReference type="DNASU" id="1026"/>
<dbReference type="Ensembl" id="ENST00000244741.10">
    <property type="protein sequence ID" value="ENSP00000244741.6"/>
    <property type="gene ID" value="ENSG00000124762.15"/>
</dbReference>
<dbReference type="Ensembl" id="ENST00000373711.4">
    <property type="protein sequence ID" value="ENSP00000362815.1"/>
    <property type="gene ID" value="ENSG00000124762.15"/>
</dbReference>
<dbReference type="Ensembl" id="ENST00000405375.5">
    <property type="protein sequence ID" value="ENSP00000384849.1"/>
    <property type="gene ID" value="ENSG00000124762.15"/>
</dbReference>
<dbReference type="Ensembl" id="ENST00000448526.6">
    <property type="protein sequence ID" value="ENSP00000409259.3"/>
    <property type="gene ID" value="ENSG00000124762.15"/>
</dbReference>
<dbReference type="Ensembl" id="ENST00000615513.4">
    <property type="protein sequence ID" value="ENSP00000482768.1"/>
    <property type="gene ID" value="ENSG00000124762.15"/>
</dbReference>
<dbReference type="GeneID" id="1026"/>
<dbReference type="KEGG" id="hsa:1026"/>
<dbReference type="MANE-Select" id="ENST00000244741.10">
    <property type="protein sequence ID" value="ENSP00000244741.6"/>
    <property type="RefSeq nucleotide sequence ID" value="NM_000389.5"/>
    <property type="RefSeq protein sequence ID" value="NP_000380.1"/>
</dbReference>
<dbReference type="UCSC" id="uc003omm.5">
    <property type="organism name" value="human"/>
</dbReference>
<dbReference type="AGR" id="HGNC:1784"/>
<dbReference type="CTD" id="1026"/>
<dbReference type="DisGeNET" id="1026"/>
<dbReference type="GeneCards" id="CDKN1A"/>
<dbReference type="HGNC" id="HGNC:1784">
    <property type="gene designation" value="CDKN1A"/>
</dbReference>
<dbReference type="HPA" id="ENSG00000124762">
    <property type="expression patterns" value="Low tissue specificity"/>
</dbReference>
<dbReference type="MalaCards" id="CDKN1A"/>
<dbReference type="MIM" id="116899">
    <property type="type" value="gene"/>
</dbReference>
<dbReference type="neXtProt" id="NX_P38936"/>
<dbReference type="OpenTargets" id="ENSG00000124762"/>
<dbReference type="Orphanet" id="652">
    <property type="disease" value="Multiple endocrine neoplasia type 1"/>
</dbReference>
<dbReference type="PharmGKB" id="PA104"/>
<dbReference type="VEuPathDB" id="HostDB:ENSG00000124762"/>
<dbReference type="eggNOG" id="KOG4743">
    <property type="taxonomic scope" value="Eukaryota"/>
</dbReference>
<dbReference type="GeneTree" id="ENSGT00940000159918"/>
<dbReference type="HOGENOM" id="CLU_077692_1_1_1"/>
<dbReference type="InParanoid" id="P38936"/>
<dbReference type="OMA" id="NFAWERV"/>
<dbReference type="OrthoDB" id="9940972at2759"/>
<dbReference type="PAN-GO" id="P38936">
    <property type="GO annotations" value="6 GO annotations based on evolutionary models"/>
</dbReference>
<dbReference type="PhylomeDB" id="P38936"/>
<dbReference type="TreeFam" id="TF101038"/>
<dbReference type="PathwayCommons" id="P38936"/>
<dbReference type="Reactome" id="R-HSA-187577">
    <property type="pathway name" value="SCF(Skp2)-mediated degradation of p27/p21"/>
</dbReference>
<dbReference type="Reactome" id="R-HSA-198323">
    <property type="pathway name" value="AKT phosphorylates targets in the cytosol"/>
</dbReference>
<dbReference type="Reactome" id="R-HSA-2559582">
    <property type="pathway name" value="Senescence-Associated Secretory Phenotype (SASP)"/>
</dbReference>
<dbReference type="Reactome" id="R-HSA-2559586">
    <property type="pathway name" value="DNA Damage/Telomere Stress Induced Senescence"/>
</dbReference>
<dbReference type="Reactome" id="R-HSA-5674400">
    <property type="pathway name" value="Constitutive Signaling by AKT1 E17K in Cancer"/>
</dbReference>
<dbReference type="Reactome" id="R-HSA-6785807">
    <property type="pathway name" value="Interleukin-4 and Interleukin-13 signaling"/>
</dbReference>
<dbReference type="Reactome" id="R-HSA-6804116">
    <property type="pathway name" value="TP53 Regulates Transcription of Genes Involved in G1 Cell Cycle Arrest"/>
</dbReference>
<dbReference type="Reactome" id="R-HSA-69202">
    <property type="pathway name" value="Cyclin E associated events during G1/S transition"/>
</dbReference>
<dbReference type="Reactome" id="R-HSA-69231">
    <property type="pathway name" value="Cyclin D associated events in G1"/>
</dbReference>
<dbReference type="Reactome" id="R-HSA-69563">
    <property type="pathway name" value="p53-Dependent G1 DNA Damage Response"/>
</dbReference>
<dbReference type="Reactome" id="R-HSA-69656">
    <property type="pathway name" value="Cyclin A:Cdk2-associated events at S phase entry"/>
</dbReference>
<dbReference type="Reactome" id="R-HSA-69895">
    <property type="pathway name" value="Transcriptional activation of cell cycle inhibitor p21"/>
</dbReference>
<dbReference type="Reactome" id="R-HSA-8852276">
    <property type="pathway name" value="The role of GTSE1 in G2/M progression after G2 checkpoint"/>
</dbReference>
<dbReference type="Reactome" id="R-HSA-8866911">
    <property type="pathway name" value="TFAP2 (AP-2) family regulates transcription of cell cycle factors"/>
</dbReference>
<dbReference type="Reactome" id="R-HSA-8878166">
    <property type="pathway name" value="Transcriptional regulation by RUNX2"/>
</dbReference>
<dbReference type="Reactome" id="R-HSA-8941855">
    <property type="pathway name" value="RUNX3 regulates CDKN1A transcription"/>
</dbReference>
<dbReference type="Reactome" id="R-HSA-8951664">
    <property type="pathway name" value="Neddylation"/>
</dbReference>
<dbReference type="Reactome" id="R-HSA-9616222">
    <property type="pathway name" value="Transcriptional regulation of granulopoiesis"/>
</dbReference>
<dbReference type="Reactome" id="R-HSA-9617828">
    <property type="pathway name" value="FOXO-mediated transcription of cell cycle genes"/>
</dbReference>
<dbReference type="Reactome" id="R-HSA-9661069">
    <property type="pathway name" value="Defective binding of RB1 mutants to E2F1,(E2F2, E2F3)"/>
</dbReference>
<dbReference type="Reactome" id="R-HSA-9702518">
    <property type="pathway name" value="STAT5 activation downstream of FLT3 ITD mutants"/>
</dbReference>
<dbReference type="Reactome" id="R-HSA-9703465">
    <property type="pathway name" value="Signaling by FLT3 fusion proteins"/>
</dbReference>
<dbReference type="Reactome" id="R-HSA-9725370">
    <property type="pathway name" value="Signaling by ALK fusions and activated point mutants"/>
</dbReference>
<dbReference type="Reactome" id="R-HSA-9755511">
    <property type="pathway name" value="KEAP1-NFE2L2 pathway"/>
</dbReference>
<dbReference type="Reactome" id="R-HSA-9825892">
    <property type="pathway name" value="Regulation of MITF-M-dependent genes involved in cell cycle and proliferation"/>
</dbReference>
<dbReference type="SignaLink" id="P38936"/>
<dbReference type="SIGNOR" id="P38936"/>
<dbReference type="BioGRID-ORCS" id="1026">
    <property type="hits" value="36 hits in 1197 CRISPR screens"/>
</dbReference>
<dbReference type="CD-CODE" id="8C2F96ED">
    <property type="entry name" value="Centrosome"/>
</dbReference>
<dbReference type="ChiTaRS" id="CDKN1A">
    <property type="organism name" value="human"/>
</dbReference>
<dbReference type="EvolutionaryTrace" id="P38936"/>
<dbReference type="GeneWiki" id="P21"/>
<dbReference type="GenomeRNAi" id="1026"/>
<dbReference type="Pharos" id="P38936">
    <property type="development level" value="Tchem"/>
</dbReference>
<dbReference type="PRO" id="PR:P38936"/>
<dbReference type="Proteomes" id="UP000005640">
    <property type="component" value="Chromosome 6"/>
</dbReference>
<dbReference type="RNAct" id="P38936">
    <property type="molecule type" value="protein"/>
</dbReference>
<dbReference type="Bgee" id="ENSG00000124762">
    <property type="expression patterns" value="Expressed in stromal cell of endometrium and 202 other cell types or tissues"/>
</dbReference>
<dbReference type="ExpressionAtlas" id="P38936">
    <property type="expression patterns" value="baseline and differential"/>
</dbReference>
<dbReference type="GO" id="GO:0000307">
    <property type="term" value="C:cyclin-dependent protein kinase holoenzyme complex"/>
    <property type="evidence" value="ECO:0000314"/>
    <property type="project" value="BHF-UCL"/>
</dbReference>
<dbReference type="GO" id="GO:0005737">
    <property type="term" value="C:cytoplasm"/>
    <property type="evidence" value="ECO:0000250"/>
    <property type="project" value="UniProtKB"/>
</dbReference>
<dbReference type="GO" id="GO:0005829">
    <property type="term" value="C:cytosol"/>
    <property type="evidence" value="ECO:0000304"/>
    <property type="project" value="Reactome"/>
</dbReference>
<dbReference type="GO" id="GO:0016604">
    <property type="term" value="C:nuclear body"/>
    <property type="evidence" value="ECO:0000314"/>
    <property type="project" value="HPA"/>
</dbReference>
<dbReference type="GO" id="GO:0005730">
    <property type="term" value="C:nucleolus"/>
    <property type="evidence" value="ECO:0000314"/>
    <property type="project" value="MGI"/>
</dbReference>
<dbReference type="GO" id="GO:0005654">
    <property type="term" value="C:nucleoplasm"/>
    <property type="evidence" value="ECO:0000314"/>
    <property type="project" value="MGI"/>
</dbReference>
<dbReference type="GO" id="GO:0005634">
    <property type="term" value="C:nucleus"/>
    <property type="evidence" value="ECO:0000314"/>
    <property type="project" value="UniProtKB"/>
</dbReference>
<dbReference type="GO" id="GO:0070557">
    <property type="term" value="C:PCNA-p21 complex"/>
    <property type="evidence" value="ECO:0000314"/>
    <property type="project" value="UniProtKB"/>
</dbReference>
<dbReference type="GO" id="GO:0032991">
    <property type="term" value="C:protein-containing complex"/>
    <property type="evidence" value="ECO:0000314"/>
    <property type="project" value="MGI"/>
</dbReference>
<dbReference type="GO" id="GO:0030332">
    <property type="term" value="F:cyclin binding"/>
    <property type="evidence" value="ECO:0000250"/>
    <property type="project" value="BHF-UCL"/>
</dbReference>
<dbReference type="GO" id="GO:0019912">
    <property type="term" value="F:cyclin-dependent protein kinase activating kinase activity"/>
    <property type="evidence" value="ECO:0000314"/>
    <property type="project" value="UniProtKB"/>
</dbReference>
<dbReference type="GO" id="GO:0004861">
    <property type="term" value="F:cyclin-dependent protein serine/threonine kinase inhibitor activity"/>
    <property type="evidence" value="ECO:0000314"/>
    <property type="project" value="DisProt"/>
</dbReference>
<dbReference type="GO" id="GO:0140677">
    <property type="term" value="F:molecular function activator activity"/>
    <property type="evidence" value="ECO:0000315"/>
    <property type="project" value="DisProt"/>
</dbReference>
<dbReference type="GO" id="GO:0140678">
    <property type="term" value="F:molecular function inhibitor activity"/>
    <property type="evidence" value="ECO:0000314"/>
    <property type="project" value="DisProt"/>
</dbReference>
<dbReference type="GO" id="GO:0019901">
    <property type="term" value="F:protein kinase binding"/>
    <property type="evidence" value="ECO:0000353"/>
    <property type="project" value="CAFA"/>
</dbReference>
<dbReference type="GO" id="GO:0004860">
    <property type="term" value="F:protein kinase inhibitor activity"/>
    <property type="evidence" value="ECO:0000315"/>
    <property type="project" value="CAFA"/>
</dbReference>
<dbReference type="GO" id="GO:0140311">
    <property type="term" value="F:protein sequestering activity"/>
    <property type="evidence" value="ECO:0000315"/>
    <property type="project" value="UniProtKB"/>
</dbReference>
<dbReference type="GO" id="GO:0120283">
    <property type="term" value="F:protein serine/threonine kinase binding"/>
    <property type="evidence" value="ECO:0000353"/>
    <property type="project" value="DisProt"/>
</dbReference>
<dbReference type="GO" id="GO:0044877">
    <property type="term" value="F:protein-containing complex binding"/>
    <property type="evidence" value="ECO:0000353"/>
    <property type="project" value="CAFA"/>
</dbReference>
<dbReference type="GO" id="GO:0031625">
    <property type="term" value="F:ubiquitin protein ligase binding"/>
    <property type="evidence" value="ECO:0000353"/>
    <property type="project" value="UniProtKB"/>
</dbReference>
<dbReference type="GO" id="GO:0008270">
    <property type="term" value="F:zinc ion binding"/>
    <property type="evidence" value="ECO:0007669"/>
    <property type="project" value="UniProtKB-KW"/>
</dbReference>
<dbReference type="GO" id="GO:0034198">
    <property type="term" value="P:cellular response to amino acid starvation"/>
    <property type="evidence" value="ECO:0000315"/>
    <property type="project" value="UniProtKB"/>
</dbReference>
<dbReference type="GO" id="GO:0071460">
    <property type="term" value="P:cellular response to cell-matrix adhesion"/>
    <property type="evidence" value="ECO:0000315"/>
    <property type="project" value="BHF-UCL"/>
</dbReference>
<dbReference type="GO" id="GO:0071480">
    <property type="term" value="P:cellular response to gamma radiation"/>
    <property type="evidence" value="ECO:0007669"/>
    <property type="project" value="Ensembl"/>
</dbReference>
<dbReference type="GO" id="GO:0071479">
    <property type="term" value="P:cellular response to ionizing radiation"/>
    <property type="evidence" value="ECO:0000315"/>
    <property type="project" value="BHF-UCL"/>
</dbReference>
<dbReference type="GO" id="GO:0071493">
    <property type="term" value="P:cellular response to UV-B"/>
    <property type="evidence" value="ECO:0000250"/>
    <property type="project" value="UniProtKB"/>
</dbReference>
<dbReference type="GO" id="GO:0090398">
    <property type="term" value="P:cellular senescence"/>
    <property type="evidence" value="ECO:0000315"/>
    <property type="project" value="BHF-UCL"/>
</dbReference>
<dbReference type="GO" id="GO:0006974">
    <property type="term" value="P:DNA damage response"/>
    <property type="evidence" value="ECO:0000315"/>
    <property type="project" value="BHF-UCL"/>
</dbReference>
<dbReference type="GO" id="GO:0030330">
    <property type="term" value="P:DNA damage response, signal transduction by p53 class mediator"/>
    <property type="evidence" value="ECO:0000304"/>
    <property type="project" value="Reactome"/>
</dbReference>
<dbReference type="GO" id="GO:0048144">
    <property type="term" value="P:fibroblast proliferation"/>
    <property type="evidence" value="ECO:0007669"/>
    <property type="project" value="Ensembl"/>
</dbReference>
<dbReference type="GO" id="GO:0000082">
    <property type="term" value="P:G1/S transition of mitotic cell cycle"/>
    <property type="evidence" value="ECO:0000304"/>
    <property type="project" value="Reactome"/>
</dbReference>
<dbReference type="GO" id="GO:0007507">
    <property type="term" value="P:heart development"/>
    <property type="evidence" value="ECO:0000250"/>
    <property type="project" value="BHF-UCL"/>
</dbReference>
<dbReference type="GO" id="GO:0051170">
    <property type="term" value="P:import into nucleus"/>
    <property type="evidence" value="ECO:0000315"/>
    <property type="project" value="DisProt"/>
</dbReference>
<dbReference type="GO" id="GO:0001701">
    <property type="term" value="P:in utero embryonic development"/>
    <property type="evidence" value="ECO:0007669"/>
    <property type="project" value="Ensembl"/>
</dbReference>
<dbReference type="GO" id="GO:0097193">
    <property type="term" value="P:intrinsic apoptotic signaling pathway"/>
    <property type="evidence" value="ECO:0000304"/>
    <property type="project" value="ProtInc"/>
</dbReference>
<dbReference type="GO" id="GO:0042771">
    <property type="term" value="P:intrinsic apoptotic signaling pathway in response to DNA damage by p53 class mediator"/>
    <property type="evidence" value="ECO:0007669"/>
    <property type="project" value="Ensembl"/>
</dbReference>
<dbReference type="GO" id="GO:0030216">
    <property type="term" value="P:keratinocyte differentiation"/>
    <property type="evidence" value="ECO:0007669"/>
    <property type="project" value="Ensembl"/>
</dbReference>
<dbReference type="GO" id="GO:0043616">
    <property type="term" value="P:keratinocyte proliferation"/>
    <property type="evidence" value="ECO:0007669"/>
    <property type="project" value="Ensembl"/>
</dbReference>
<dbReference type="GO" id="GO:0031571">
    <property type="term" value="P:mitotic G1 DNA damage checkpoint signaling"/>
    <property type="evidence" value="ECO:0000314"/>
    <property type="project" value="BHF-UCL"/>
</dbReference>
<dbReference type="GO" id="GO:0007095">
    <property type="term" value="P:mitotic G2 DNA damage checkpoint signaling"/>
    <property type="evidence" value="ECO:0000315"/>
    <property type="project" value="UniProtKB"/>
</dbReference>
<dbReference type="GO" id="GO:1905179">
    <property type="term" value="P:negative regulation of cardiac muscle tissue regeneration"/>
    <property type="evidence" value="ECO:0000250"/>
    <property type="project" value="BHF-UCL"/>
</dbReference>
<dbReference type="GO" id="GO:0030308">
    <property type="term" value="P:negative regulation of cell growth"/>
    <property type="evidence" value="ECO:0000314"/>
    <property type="project" value="BHF-UCL"/>
</dbReference>
<dbReference type="GO" id="GO:0008285">
    <property type="term" value="P:negative regulation of cell population proliferation"/>
    <property type="evidence" value="ECO:0000314"/>
    <property type="project" value="BHF-UCL"/>
</dbReference>
<dbReference type="GO" id="GO:1904030">
    <property type="term" value="P:negative regulation of cyclin-dependent protein kinase activity"/>
    <property type="evidence" value="ECO:0000315"/>
    <property type="project" value="CAFA"/>
</dbReference>
<dbReference type="GO" id="GO:2000279">
    <property type="term" value="P:negative regulation of DNA biosynthetic process"/>
    <property type="evidence" value="ECO:0000315"/>
    <property type="project" value="UniProtKB"/>
</dbReference>
<dbReference type="GO" id="GO:2000134">
    <property type="term" value="P:negative regulation of G1/S transition of mitotic cell cycle"/>
    <property type="evidence" value="ECO:0000316"/>
    <property type="project" value="MGI"/>
</dbReference>
<dbReference type="GO" id="GO:0010629">
    <property type="term" value="P:negative regulation of gene expression"/>
    <property type="evidence" value="ECO:0007669"/>
    <property type="project" value="Ensembl"/>
</dbReference>
<dbReference type="GO" id="GO:1904706">
    <property type="term" value="P:negative regulation of vascular associated smooth muscle cell proliferation"/>
    <property type="evidence" value="ECO:0000315"/>
    <property type="project" value="BHF-UCL"/>
</dbReference>
<dbReference type="GO" id="GO:0090402">
    <property type="term" value="P:oncogene-induced cell senescence"/>
    <property type="evidence" value="ECO:0007669"/>
    <property type="project" value="Ensembl"/>
</dbReference>
<dbReference type="GO" id="GO:0030890">
    <property type="term" value="P:positive regulation of B cell proliferation"/>
    <property type="evidence" value="ECO:0007669"/>
    <property type="project" value="Ensembl"/>
</dbReference>
<dbReference type="GO" id="GO:0045740">
    <property type="term" value="P:positive regulation of DNA replication"/>
    <property type="evidence" value="ECO:0000304"/>
    <property type="project" value="Reactome"/>
</dbReference>
<dbReference type="GO" id="GO:0048146">
    <property type="term" value="P:positive regulation of fibroblast proliferation"/>
    <property type="evidence" value="ECO:0000315"/>
    <property type="project" value="BHF-UCL"/>
</dbReference>
<dbReference type="GO" id="GO:0043068">
    <property type="term" value="P:positive regulation of programmed cell death"/>
    <property type="evidence" value="ECO:0007669"/>
    <property type="project" value="Ensembl"/>
</dbReference>
<dbReference type="GO" id="GO:0045860">
    <property type="term" value="P:positive regulation of protein kinase activity"/>
    <property type="evidence" value="ECO:0000314"/>
    <property type="project" value="MGI"/>
</dbReference>
<dbReference type="GO" id="GO:2000379">
    <property type="term" value="P:positive regulation of reactive oxygen species metabolic process"/>
    <property type="evidence" value="ECO:0000315"/>
    <property type="project" value="BHF-UCL"/>
</dbReference>
<dbReference type="GO" id="GO:0006606">
    <property type="term" value="P:protein import into nucleus"/>
    <property type="evidence" value="ECO:0007669"/>
    <property type="project" value="Ensembl"/>
</dbReference>
<dbReference type="GO" id="GO:0007265">
    <property type="term" value="P:Ras protein signal transduction"/>
    <property type="evidence" value="ECO:0000270"/>
    <property type="project" value="BHF-UCL"/>
</dbReference>
<dbReference type="GO" id="GO:0051726">
    <property type="term" value="P:regulation of cell cycle"/>
    <property type="evidence" value="ECO:0000314"/>
    <property type="project" value="BHF-UCL"/>
</dbReference>
<dbReference type="GO" id="GO:1902806">
    <property type="term" value="P:regulation of cell cycle G1/S phase transition"/>
    <property type="evidence" value="ECO:0000315"/>
    <property type="project" value="UniProtKB"/>
</dbReference>
<dbReference type="GO" id="GO:2000045">
    <property type="term" value="P:regulation of G1/S transition of mitotic cell cycle"/>
    <property type="evidence" value="ECO:0000314"/>
    <property type="project" value="BHF-UCL"/>
</dbReference>
<dbReference type="GO" id="GO:0010389">
    <property type="term" value="P:regulation of G2/M transition of mitotic cell cycle"/>
    <property type="evidence" value="ECO:0000315"/>
    <property type="project" value="BHF-UCL"/>
</dbReference>
<dbReference type="GO" id="GO:0090399">
    <property type="term" value="P:replicative senescence"/>
    <property type="evidence" value="ECO:0007669"/>
    <property type="project" value="Ensembl"/>
</dbReference>
<dbReference type="GO" id="GO:0090400">
    <property type="term" value="P:stress-induced premature senescence"/>
    <property type="evidence" value="ECO:0000304"/>
    <property type="project" value="BHF-UCL"/>
</dbReference>
<dbReference type="GO" id="GO:0042246">
    <property type="term" value="P:tissue regeneration"/>
    <property type="evidence" value="ECO:0007669"/>
    <property type="project" value="Ensembl"/>
</dbReference>
<dbReference type="GO" id="GO:0042060">
    <property type="term" value="P:wound healing"/>
    <property type="evidence" value="ECO:0007669"/>
    <property type="project" value="Ensembl"/>
</dbReference>
<dbReference type="DisProt" id="DP00016"/>
<dbReference type="FunFam" id="4.10.365.10:FF:000003">
    <property type="entry name" value="cyclin-dependent kinase inhibitor 1 isoform X1"/>
    <property type="match status" value="1"/>
</dbReference>
<dbReference type="Gene3D" id="4.10.365.10">
    <property type="entry name" value="p27"/>
    <property type="match status" value="1"/>
</dbReference>
<dbReference type="IDEAL" id="IID00043"/>
<dbReference type="InterPro" id="IPR003175">
    <property type="entry name" value="CDI_dom"/>
</dbReference>
<dbReference type="InterPro" id="IPR044898">
    <property type="entry name" value="CDI_dom_sf"/>
</dbReference>
<dbReference type="InterPro" id="IPR029841">
    <property type="entry name" value="CDKN1A"/>
</dbReference>
<dbReference type="PANTHER" id="PTHR46778:SF1">
    <property type="entry name" value="CYCLIN-DEPENDENT KINASE INHIBITOR 1"/>
    <property type="match status" value="1"/>
</dbReference>
<dbReference type="PANTHER" id="PTHR46778">
    <property type="entry name" value="CYCLIN-DEPENDENT KINASE INHIBITOR 1-RELATED"/>
    <property type="match status" value="1"/>
</dbReference>
<dbReference type="Pfam" id="PF02234">
    <property type="entry name" value="CDI"/>
    <property type="match status" value="1"/>
</dbReference>
<protein>
    <recommendedName>
        <fullName>Cyclin-dependent kinase inhibitor 1</fullName>
    </recommendedName>
    <alternativeName>
        <fullName>CDK-interacting protein 1</fullName>
    </alternativeName>
    <alternativeName>
        <fullName>Melanoma differentiation-associated protein 6</fullName>
        <shortName>MDA-6</shortName>
    </alternativeName>
    <alternativeName>
        <fullName>p21</fullName>
    </alternativeName>
</protein>